<organism>
    <name type="scientific">Homo sapiens</name>
    <name type="common">Human</name>
    <dbReference type="NCBI Taxonomy" id="9606"/>
    <lineage>
        <taxon>Eukaryota</taxon>
        <taxon>Metazoa</taxon>
        <taxon>Chordata</taxon>
        <taxon>Craniata</taxon>
        <taxon>Vertebrata</taxon>
        <taxon>Euteleostomi</taxon>
        <taxon>Mammalia</taxon>
        <taxon>Eutheria</taxon>
        <taxon>Euarchontoglires</taxon>
        <taxon>Primates</taxon>
        <taxon>Haplorrhini</taxon>
        <taxon>Catarrhini</taxon>
        <taxon>Hominidae</taxon>
        <taxon>Homo</taxon>
    </lineage>
</organism>
<reference key="1">
    <citation type="journal article" date="1992" name="Nature">
        <title>The Lowe's oculocerebrorenal syndrome gene encodes a protein highly homologous to inositol polyphosphate-5-phosphatase.</title>
        <authorList>
            <person name="Attree O."/>
            <person name="Olivos I.M."/>
            <person name="Okabe I."/>
            <person name="Bailey L.C."/>
            <person name="Nelson D.L."/>
            <person name="Lewis R.A."/>
            <person name="McInnes R.R."/>
            <person name="Nussbaum R.L."/>
        </authorList>
    </citation>
    <scope>NUCLEOTIDE SEQUENCE [MRNA] (ISOFORM B)</scope>
    <source>
        <tissue>Kidney</tissue>
    </source>
</reference>
<reference key="2">
    <citation type="submission" date="2001-03" db="EMBL/GenBank/DDBJ databases">
        <authorList>
            <person name="Attree O."/>
            <person name="Olivos I.M."/>
            <person name="Okabe I."/>
            <person name="Bailey L.C."/>
            <person name="Nelson D.L."/>
            <person name="Lewis R.A."/>
            <person name="McInnes R.R."/>
            <person name="Nussbaum R.L."/>
        </authorList>
    </citation>
    <scope>SEQUENCE REVISION TO 585</scope>
</reference>
<reference key="3">
    <citation type="journal article" date="1997" name="Hum. Genet.">
        <title>Physical mapping and genomic structure of the Lowe syndrome gene OCRL1.</title>
        <authorList>
            <person name="Nussbaum R.L."/>
            <person name="Orrison B.M."/>
            <person name="Janne P.A."/>
            <person name="Charnas L.R."/>
            <person name="Chinault A.C."/>
        </authorList>
    </citation>
    <scope>NUCLEOTIDE SEQUENCE [MRNA]</scope>
    <scope>ALTERNATIVE SPLICING</scope>
    <source>
        <tissue>Brain</tissue>
    </source>
</reference>
<reference key="4">
    <citation type="journal article" date="2004" name="Nat. Genet.">
        <title>Complete sequencing and characterization of 21,243 full-length human cDNAs.</title>
        <authorList>
            <person name="Ota T."/>
            <person name="Suzuki Y."/>
            <person name="Nishikawa T."/>
            <person name="Otsuki T."/>
            <person name="Sugiyama T."/>
            <person name="Irie R."/>
            <person name="Wakamatsu A."/>
            <person name="Hayashi K."/>
            <person name="Sato H."/>
            <person name="Nagai K."/>
            <person name="Kimura K."/>
            <person name="Makita H."/>
            <person name="Sekine M."/>
            <person name="Obayashi M."/>
            <person name="Nishi T."/>
            <person name="Shibahara T."/>
            <person name="Tanaka T."/>
            <person name="Ishii S."/>
            <person name="Yamamoto J."/>
            <person name="Saito K."/>
            <person name="Kawai Y."/>
            <person name="Isono Y."/>
            <person name="Nakamura Y."/>
            <person name="Nagahari K."/>
            <person name="Murakami K."/>
            <person name="Yasuda T."/>
            <person name="Iwayanagi T."/>
            <person name="Wagatsuma M."/>
            <person name="Shiratori A."/>
            <person name="Sudo H."/>
            <person name="Hosoiri T."/>
            <person name="Kaku Y."/>
            <person name="Kodaira H."/>
            <person name="Kondo H."/>
            <person name="Sugawara M."/>
            <person name="Takahashi M."/>
            <person name="Kanda K."/>
            <person name="Yokoi T."/>
            <person name="Furuya T."/>
            <person name="Kikkawa E."/>
            <person name="Omura Y."/>
            <person name="Abe K."/>
            <person name="Kamihara K."/>
            <person name="Katsuta N."/>
            <person name="Sato K."/>
            <person name="Tanikawa M."/>
            <person name="Yamazaki M."/>
            <person name="Ninomiya K."/>
            <person name="Ishibashi T."/>
            <person name="Yamashita H."/>
            <person name="Murakawa K."/>
            <person name="Fujimori K."/>
            <person name="Tanai H."/>
            <person name="Kimata M."/>
            <person name="Watanabe M."/>
            <person name="Hiraoka S."/>
            <person name="Chiba Y."/>
            <person name="Ishida S."/>
            <person name="Ono Y."/>
            <person name="Takiguchi S."/>
            <person name="Watanabe S."/>
            <person name="Yosida M."/>
            <person name="Hotuta T."/>
            <person name="Kusano J."/>
            <person name="Kanehori K."/>
            <person name="Takahashi-Fujii A."/>
            <person name="Hara H."/>
            <person name="Tanase T.-O."/>
            <person name="Nomura Y."/>
            <person name="Togiya S."/>
            <person name="Komai F."/>
            <person name="Hara R."/>
            <person name="Takeuchi K."/>
            <person name="Arita M."/>
            <person name="Imose N."/>
            <person name="Musashino K."/>
            <person name="Yuuki H."/>
            <person name="Oshima A."/>
            <person name="Sasaki N."/>
            <person name="Aotsuka S."/>
            <person name="Yoshikawa Y."/>
            <person name="Matsunawa H."/>
            <person name="Ichihara T."/>
            <person name="Shiohata N."/>
            <person name="Sano S."/>
            <person name="Moriya S."/>
            <person name="Momiyama H."/>
            <person name="Satoh N."/>
            <person name="Takami S."/>
            <person name="Terashima Y."/>
            <person name="Suzuki O."/>
            <person name="Nakagawa S."/>
            <person name="Senoh A."/>
            <person name="Mizoguchi H."/>
            <person name="Goto Y."/>
            <person name="Shimizu F."/>
            <person name="Wakebe H."/>
            <person name="Hishigaki H."/>
            <person name="Watanabe T."/>
            <person name="Sugiyama A."/>
            <person name="Takemoto M."/>
            <person name="Kawakami B."/>
            <person name="Yamazaki M."/>
            <person name="Watanabe K."/>
            <person name="Kumagai A."/>
            <person name="Itakura S."/>
            <person name="Fukuzumi Y."/>
            <person name="Fujimori Y."/>
            <person name="Komiyama M."/>
            <person name="Tashiro H."/>
            <person name="Tanigami A."/>
            <person name="Fujiwara T."/>
            <person name="Ono T."/>
            <person name="Yamada K."/>
            <person name="Fujii Y."/>
            <person name="Ozaki K."/>
            <person name="Hirao M."/>
            <person name="Ohmori Y."/>
            <person name="Kawabata A."/>
            <person name="Hikiji T."/>
            <person name="Kobatake N."/>
            <person name="Inagaki H."/>
            <person name="Ikema Y."/>
            <person name="Okamoto S."/>
            <person name="Okitani R."/>
            <person name="Kawakami T."/>
            <person name="Noguchi S."/>
            <person name="Itoh T."/>
            <person name="Shigeta K."/>
            <person name="Senba T."/>
            <person name="Matsumura K."/>
            <person name="Nakajima Y."/>
            <person name="Mizuno T."/>
            <person name="Morinaga M."/>
            <person name="Sasaki M."/>
            <person name="Togashi T."/>
            <person name="Oyama M."/>
            <person name="Hata H."/>
            <person name="Watanabe M."/>
            <person name="Komatsu T."/>
            <person name="Mizushima-Sugano J."/>
            <person name="Satoh T."/>
            <person name="Shirai Y."/>
            <person name="Takahashi Y."/>
            <person name="Nakagawa K."/>
            <person name="Okumura K."/>
            <person name="Nagase T."/>
            <person name="Nomura N."/>
            <person name="Kikuchi H."/>
            <person name="Masuho Y."/>
            <person name="Yamashita R."/>
            <person name="Nakai K."/>
            <person name="Yada T."/>
            <person name="Nakamura Y."/>
            <person name="Ohara O."/>
            <person name="Isogai T."/>
            <person name="Sugano S."/>
        </authorList>
    </citation>
    <scope>NUCLEOTIDE SEQUENCE [LARGE SCALE MRNA] (ISOFORM A)</scope>
    <source>
        <tissue>Uterus</tissue>
    </source>
</reference>
<reference key="5">
    <citation type="journal article" date="2005" name="Nature">
        <title>The DNA sequence of the human X chromosome.</title>
        <authorList>
            <person name="Ross M.T."/>
            <person name="Grafham D.V."/>
            <person name="Coffey A.J."/>
            <person name="Scherer S."/>
            <person name="McLay K."/>
            <person name="Muzny D."/>
            <person name="Platzer M."/>
            <person name="Howell G.R."/>
            <person name="Burrows C."/>
            <person name="Bird C.P."/>
            <person name="Frankish A."/>
            <person name="Lovell F.L."/>
            <person name="Howe K.L."/>
            <person name="Ashurst J.L."/>
            <person name="Fulton R.S."/>
            <person name="Sudbrak R."/>
            <person name="Wen G."/>
            <person name="Jones M.C."/>
            <person name="Hurles M.E."/>
            <person name="Andrews T.D."/>
            <person name="Scott C.E."/>
            <person name="Searle S."/>
            <person name="Ramser J."/>
            <person name="Whittaker A."/>
            <person name="Deadman R."/>
            <person name="Carter N.P."/>
            <person name="Hunt S.E."/>
            <person name="Chen R."/>
            <person name="Cree A."/>
            <person name="Gunaratne P."/>
            <person name="Havlak P."/>
            <person name="Hodgson A."/>
            <person name="Metzker M.L."/>
            <person name="Richards S."/>
            <person name="Scott G."/>
            <person name="Steffen D."/>
            <person name="Sodergren E."/>
            <person name="Wheeler D.A."/>
            <person name="Worley K.C."/>
            <person name="Ainscough R."/>
            <person name="Ambrose K.D."/>
            <person name="Ansari-Lari M.A."/>
            <person name="Aradhya S."/>
            <person name="Ashwell R.I."/>
            <person name="Babbage A.K."/>
            <person name="Bagguley C.L."/>
            <person name="Ballabio A."/>
            <person name="Banerjee R."/>
            <person name="Barker G.E."/>
            <person name="Barlow K.F."/>
            <person name="Barrett I.P."/>
            <person name="Bates K.N."/>
            <person name="Beare D.M."/>
            <person name="Beasley H."/>
            <person name="Beasley O."/>
            <person name="Beck A."/>
            <person name="Bethel G."/>
            <person name="Blechschmidt K."/>
            <person name="Brady N."/>
            <person name="Bray-Allen S."/>
            <person name="Bridgeman A.M."/>
            <person name="Brown A.J."/>
            <person name="Brown M.J."/>
            <person name="Bonnin D."/>
            <person name="Bruford E.A."/>
            <person name="Buhay C."/>
            <person name="Burch P."/>
            <person name="Burford D."/>
            <person name="Burgess J."/>
            <person name="Burrill W."/>
            <person name="Burton J."/>
            <person name="Bye J.M."/>
            <person name="Carder C."/>
            <person name="Carrel L."/>
            <person name="Chako J."/>
            <person name="Chapman J.C."/>
            <person name="Chavez D."/>
            <person name="Chen E."/>
            <person name="Chen G."/>
            <person name="Chen Y."/>
            <person name="Chen Z."/>
            <person name="Chinault C."/>
            <person name="Ciccodicola A."/>
            <person name="Clark S.Y."/>
            <person name="Clarke G."/>
            <person name="Clee C.M."/>
            <person name="Clegg S."/>
            <person name="Clerc-Blankenburg K."/>
            <person name="Clifford K."/>
            <person name="Cobley V."/>
            <person name="Cole C.G."/>
            <person name="Conquer J.S."/>
            <person name="Corby N."/>
            <person name="Connor R.E."/>
            <person name="David R."/>
            <person name="Davies J."/>
            <person name="Davis C."/>
            <person name="Davis J."/>
            <person name="Delgado O."/>
            <person name="Deshazo D."/>
            <person name="Dhami P."/>
            <person name="Ding Y."/>
            <person name="Dinh H."/>
            <person name="Dodsworth S."/>
            <person name="Draper H."/>
            <person name="Dugan-Rocha S."/>
            <person name="Dunham A."/>
            <person name="Dunn M."/>
            <person name="Durbin K.J."/>
            <person name="Dutta I."/>
            <person name="Eades T."/>
            <person name="Ellwood M."/>
            <person name="Emery-Cohen A."/>
            <person name="Errington H."/>
            <person name="Evans K.L."/>
            <person name="Faulkner L."/>
            <person name="Francis F."/>
            <person name="Frankland J."/>
            <person name="Fraser A.E."/>
            <person name="Galgoczy P."/>
            <person name="Gilbert J."/>
            <person name="Gill R."/>
            <person name="Gloeckner G."/>
            <person name="Gregory S.G."/>
            <person name="Gribble S."/>
            <person name="Griffiths C."/>
            <person name="Grocock R."/>
            <person name="Gu Y."/>
            <person name="Gwilliam R."/>
            <person name="Hamilton C."/>
            <person name="Hart E.A."/>
            <person name="Hawes A."/>
            <person name="Heath P.D."/>
            <person name="Heitmann K."/>
            <person name="Hennig S."/>
            <person name="Hernandez J."/>
            <person name="Hinzmann B."/>
            <person name="Ho S."/>
            <person name="Hoffs M."/>
            <person name="Howden P.J."/>
            <person name="Huckle E.J."/>
            <person name="Hume J."/>
            <person name="Hunt P.J."/>
            <person name="Hunt A.R."/>
            <person name="Isherwood J."/>
            <person name="Jacob L."/>
            <person name="Johnson D."/>
            <person name="Jones S."/>
            <person name="de Jong P.J."/>
            <person name="Joseph S.S."/>
            <person name="Keenan S."/>
            <person name="Kelly S."/>
            <person name="Kershaw J.K."/>
            <person name="Khan Z."/>
            <person name="Kioschis P."/>
            <person name="Klages S."/>
            <person name="Knights A.J."/>
            <person name="Kosiura A."/>
            <person name="Kovar-Smith C."/>
            <person name="Laird G.K."/>
            <person name="Langford C."/>
            <person name="Lawlor S."/>
            <person name="Leversha M."/>
            <person name="Lewis L."/>
            <person name="Liu W."/>
            <person name="Lloyd C."/>
            <person name="Lloyd D.M."/>
            <person name="Loulseged H."/>
            <person name="Loveland J.E."/>
            <person name="Lovell J.D."/>
            <person name="Lozado R."/>
            <person name="Lu J."/>
            <person name="Lyne R."/>
            <person name="Ma J."/>
            <person name="Maheshwari M."/>
            <person name="Matthews L.H."/>
            <person name="McDowall J."/>
            <person name="McLaren S."/>
            <person name="McMurray A."/>
            <person name="Meidl P."/>
            <person name="Meitinger T."/>
            <person name="Milne S."/>
            <person name="Miner G."/>
            <person name="Mistry S.L."/>
            <person name="Morgan M."/>
            <person name="Morris S."/>
            <person name="Mueller I."/>
            <person name="Mullikin J.C."/>
            <person name="Nguyen N."/>
            <person name="Nordsiek G."/>
            <person name="Nyakatura G."/>
            <person name="O'dell C.N."/>
            <person name="Okwuonu G."/>
            <person name="Palmer S."/>
            <person name="Pandian R."/>
            <person name="Parker D."/>
            <person name="Parrish J."/>
            <person name="Pasternak S."/>
            <person name="Patel D."/>
            <person name="Pearce A.V."/>
            <person name="Pearson D.M."/>
            <person name="Pelan S.E."/>
            <person name="Perez L."/>
            <person name="Porter K.M."/>
            <person name="Ramsey Y."/>
            <person name="Reichwald K."/>
            <person name="Rhodes S."/>
            <person name="Ridler K.A."/>
            <person name="Schlessinger D."/>
            <person name="Schueler M.G."/>
            <person name="Sehra H.K."/>
            <person name="Shaw-Smith C."/>
            <person name="Shen H."/>
            <person name="Sheridan E.M."/>
            <person name="Shownkeen R."/>
            <person name="Skuce C.D."/>
            <person name="Smith M.L."/>
            <person name="Sotheran E.C."/>
            <person name="Steingruber H.E."/>
            <person name="Steward C.A."/>
            <person name="Storey R."/>
            <person name="Swann R.M."/>
            <person name="Swarbreck D."/>
            <person name="Tabor P.E."/>
            <person name="Taudien S."/>
            <person name="Taylor T."/>
            <person name="Teague B."/>
            <person name="Thomas K."/>
            <person name="Thorpe A."/>
            <person name="Timms K."/>
            <person name="Tracey A."/>
            <person name="Trevanion S."/>
            <person name="Tromans A.C."/>
            <person name="d'Urso M."/>
            <person name="Verduzco D."/>
            <person name="Villasana D."/>
            <person name="Waldron L."/>
            <person name="Wall M."/>
            <person name="Wang Q."/>
            <person name="Warren J."/>
            <person name="Warry G.L."/>
            <person name="Wei X."/>
            <person name="West A."/>
            <person name="Whitehead S.L."/>
            <person name="Whiteley M.N."/>
            <person name="Wilkinson J.E."/>
            <person name="Willey D.L."/>
            <person name="Williams G."/>
            <person name="Williams L."/>
            <person name="Williamson A."/>
            <person name="Williamson H."/>
            <person name="Wilming L."/>
            <person name="Woodmansey R.L."/>
            <person name="Wray P.W."/>
            <person name="Yen J."/>
            <person name="Zhang J."/>
            <person name="Zhou J."/>
            <person name="Zoghbi H."/>
            <person name="Zorilla S."/>
            <person name="Buck D."/>
            <person name="Reinhardt R."/>
            <person name="Poustka A."/>
            <person name="Rosenthal A."/>
            <person name="Lehrach H."/>
            <person name="Meindl A."/>
            <person name="Minx P.J."/>
            <person name="Hillier L.W."/>
            <person name="Willard H.F."/>
            <person name="Wilson R.K."/>
            <person name="Waterston R.H."/>
            <person name="Rice C.M."/>
            <person name="Vaudin M."/>
            <person name="Coulson A."/>
            <person name="Nelson D.L."/>
            <person name="Weinstock G."/>
            <person name="Sulston J.E."/>
            <person name="Durbin R.M."/>
            <person name="Hubbard T."/>
            <person name="Gibbs R.A."/>
            <person name="Beck S."/>
            <person name="Rogers J."/>
            <person name="Bentley D.R."/>
        </authorList>
    </citation>
    <scope>NUCLEOTIDE SEQUENCE [LARGE SCALE GENOMIC DNA]</scope>
</reference>
<reference key="6">
    <citation type="submission" date="2005-09" db="EMBL/GenBank/DDBJ databases">
        <authorList>
            <person name="Mural R.J."/>
            <person name="Istrail S."/>
            <person name="Sutton G.G."/>
            <person name="Florea L."/>
            <person name="Halpern A.L."/>
            <person name="Mobarry C.M."/>
            <person name="Lippert R."/>
            <person name="Walenz B."/>
            <person name="Shatkay H."/>
            <person name="Dew I."/>
            <person name="Miller J.R."/>
            <person name="Flanigan M.J."/>
            <person name="Edwards N.J."/>
            <person name="Bolanos R."/>
            <person name="Fasulo D."/>
            <person name="Halldorsson B.V."/>
            <person name="Hannenhalli S."/>
            <person name="Turner R."/>
            <person name="Yooseph S."/>
            <person name="Lu F."/>
            <person name="Nusskern D.R."/>
            <person name="Shue B.C."/>
            <person name="Zheng X.H."/>
            <person name="Zhong F."/>
            <person name="Delcher A.L."/>
            <person name="Huson D.H."/>
            <person name="Kravitz S.A."/>
            <person name="Mouchard L."/>
            <person name="Reinert K."/>
            <person name="Remington K.A."/>
            <person name="Clark A.G."/>
            <person name="Waterman M.S."/>
            <person name="Eichler E.E."/>
            <person name="Adams M.D."/>
            <person name="Hunkapiller M.W."/>
            <person name="Myers E.W."/>
            <person name="Venter J.C."/>
        </authorList>
    </citation>
    <scope>NUCLEOTIDE SEQUENCE [LARGE SCALE GENOMIC DNA]</scope>
</reference>
<reference key="7">
    <citation type="journal article" date="2004" name="Genome Res.">
        <title>The status, quality, and expansion of the NIH full-length cDNA project: the Mammalian Gene Collection (MGC).</title>
        <authorList>
            <consortium name="The MGC Project Team"/>
        </authorList>
    </citation>
    <scope>NUCLEOTIDE SEQUENCE [LARGE SCALE MRNA] (ISOFORM B)</scope>
</reference>
<reference key="8">
    <citation type="journal article" date="1993" name="Hum. Mol. Genet.">
        <title>Nonsense mutations in the OCRL-1 gene in patients with the oculocerebrorenal syndrome of Lowe.</title>
        <authorList>
            <person name="Leahey A.-M."/>
            <person name="Charnas L.R."/>
            <person name="Nussbaum R.L."/>
        </authorList>
    </citation>
    <scope>NUCLEOTIDE SEQUENCE [MRNA] OF 814-843</scope>
</reference>
<reference key="9">
    <citation type="journal article" date="1995" name="Proc. Natl. Acad. Sci. U.S.A.">
        <title>The protein deficient in Lowe syndrome is a phosphatidylinositol-4,5-bisphosphate 5-phosphatase.</title>
        <authorList>
            <person name="Zhang X."/>
            <person name="Jefferson A.B."/>
            <person name="Auethavekiat V."/>
            <person name="Majerus P.W."/>
        </authorList>
    </citation>
    <scope>CATALYTIC ACTIVITY</scope>
    <scope>BIOPHYSICOCHEMICAL PROPERTIES</scope>
</reference>
<reference key="10">
    <citation type="journal article" date="1998" name="J. Biol. Chem.">
        <title>Cell lines from kidney proximal tubules of a patient with Lowe syndrome lack OCRL inositol polyphosphate 5-phosphatase and accumulate phosphatidylinositol 4,5-bisphosphate.</title>
        <authorList>
            <person name="Zhang X."/>
            <person name="Hartz P.A."/>
            <person name="Philip E."/>
            <person name="Racusen L.C."/>
            <person name="Majerus P.W."/>
        </authorList>
    </citation>
    <scope>CATALYTIC ACTIVITY</scope>
    <scope>SUBCELLULAR LOCATION</scope>
</reference>
<reference key="11">
    <citation type="journal article" date="2000" name="J. Biol. Chem.">
        <title>The isolation and characterization of a cDNA encoding phospholipid-specific inositol polyphosphate 5-phosphatase.</title>
        <authorList>
            <person name="Kisseleva M.V."/>
            <person name="Wilson M.P."/>
            <person name="Majerus P.W."/>
        </authorList>
    </citation>
    <scope>CATALYTIC ACTIVITY</scope>
    <scope>FUNCTION</scope>
</reference>
<reference key="12">
    <citation type="journal article" date="2004" name="FEBS Lett.">
        <title>Type II phosphoinositide 5-phosphatases have unique sensitivities towards fatty acid composition and head group phosphorylation.</title>
        <authorList>
            <person name="Schmid A.C."/>
            <person name="Wise H.M."/>
            <person name="Mitchell C.A."/>
            <person name="Nussbaum R."/>
            <person name="Woscholski R."/>
        </authorList>
    </citation>
    <scope>CATALYTIC ACTIVITY</scope>
    <scope>SUBSTRATE SPECIFICITY</scope>
</reference>
<reference key="13">
    <citation type="journal article" date="2010" name="Proc. Natl. Acad. Sci. U.S.A.">
        <title>Two closely related endocytic proteins that share a common OCRL-binding motif with APPL1.</title>
        <authorList>
            <person name="Swan L.E."/>
            <person name="Tomasini L."/>
            <person name="Pirruccello M."/>
            <person name="Lunardi J."/>
            <person name="De Camilli P."/>
        </authorList>
    </citation>
    <scope>INTERACTION WITH APPL1; CLATHRIN; PHETA1 AND PHETA2</scope>
    <scope>SUBCELLULAR LOCATION</scope>
    <scope>VARIANTS OCRL ASN-768 AND PRO-797</scope>
</reference>
<reference key="14">
    <citation type="journal article" date="2011" name="BMC Syst. Biol.">
        <title>Initial characterization of the human central proteome.</title>
        <authorList>
            <person name="Burkard T.R."/>
            <person name="Planyavsky M."/>
            <person name="Kaupe I."/>
            <person name="Breitwieser F.P."/>
            <person name="Buerckstuemmer T."/>
            <person name="Bennett K.L."/>
            <person name="Superti-Furga G."/>
            <person name="Colinge J."/>
        </authorList>
    </citation>
    <scope>IDENTIFICATION BY MASS SPECTROMETRY [LARGE SCALE ANALYSIS]</scope>
</reference>
<reference key="15">
    <citation type="journal article" date="2011" name="EMBO J.">
        <title>OCRL controls trafficking through early endosomes via PtdIns4,5P(2)-dependent regulation of endosomal actin.</title>
        <authorList>
            <person name="Vicinanza M."/>
            <person name="Di Campli A."/>
            <person name="Polishchuk E."/>
            <person name="Santoro M."/>
            <person name="Di Tullio G."/>
            <person name="Godi A."/>
            <person name="Levtchenko E."/>
            <person name="De Leo M.G."/>
            <person name="Polishchuk R."/>
            <person name="Sandoval L."/>
            <person name="Marzolo M.P."/>
            <person name="De Matteis M.A."/>
        </authorList>
    </citation>
    <scope>FUNCTION</scope>
    <scope>SUBCELLULAR LOCATION</scope>
</reference>
<reference key="16">
    <citation type="journal article" date="2011" name="Mol. Biol. Cell">
        <title>The PH domain proteins IPIP27A and B link OCRL1 to receptor recycling in the endocytic pathway.</title>
        <authorList>
            <person name="Noakes C.J."/>
            <person name="Lee G."/>
            <person name="Lowe M."/>
        </authorList>
    </citation>
    <scope>INTERACTION WITH APPL1; PHETA1 AND PHETA2</scope>
    <scope>VARIANT OCRL ASN-768</scope>
    <scope>CHARACTERIZATION OF VARIANT OCRL ASN-768</scope>
</reference>
<reference key="17">
    <citation type="journal article" date="2012" name="Hum. Mol. Genet.">
        <title>OCRL localizes to the primary cilium: a new role for cilia in Lowe syndrome.</title>
        <authorList>
            <person name="Luo N."/>
            <person name="West C.C."/>
            <person name="Murga-Zamalloa C.A."/>
            <person name="Sun L."/>
            <person name="Anderson R.M."/>
            <person name="Wells C.D."/>
            <person name="Weinreb R.N."/>
            <person name="Travers J.B."/>
            <person name="Khanna H."/>
            <person name="Sun Y."/>
        </authorList>
    </citation>
    <scope>FUNCTION IN CILIA ASSEMBLY</scope>
    <scope>TISSUE SPECIFICITY</scope>
    <scope>SUBCELLULAR LOCATION</scope>
    <scope>INTERACTION WITH RAB8A</scope>
    <scope>MUTAGENESIS OF ASP-422; ASP-499 AND PHE-668</scope>
</reference>
<reference key="18">
    <citation type="journal article" date="2012" name="Hum. Mol. Genet.">
        <title>The Lowe syndrome protein OCRL1 is involved in primary cilia assembly.</title>
        <authorList>
            <person name="Coon B.G."/>
            <person name="Hernandez V."/>
            <person name="Madhivanan K."/>
            <person name="Mukherjee D."/>
            <person name="Hanna C.B."/>
            <person name="Barinaga-Rementeria Ramirez I."/>
            <person name="Lowe M."/>
            <person name="Beales P.L."/>
            <person name="Aguilar R.C."/>
        </authorList>
    </citation>
    <scope>FUNCTION IN CILIOGENESIS</scope>
</reference>
<reference key="19">
    <citation type="journal article" date="2012" name="Mol. Biol. Cell">
        <title>Recruitment of OCRL and Inpp5B to phagosomes by Rab5 and APPL1 depletes phosphoinositides and attenuates Akt signaling.</title>
        <authorList>
            <person name="Bohdanowicz M."/>
            <person name="Balkin D.M."/>
            <person name="De Camilli P."/>
            <person name="Grinstein S."/>
        </authorList>
    </citation>
    <scope>FUNCTION</scope>
    <scope>SUBCELLULAR LOCATION</scope>
</reference>
<reference key="20">
    <citation type="journal article" date="2012" name="Trends Biochem. Sci.">
        <title>Inositol 5-phosphatases: insights from the Lowe syndrome protein OCRL.</title>
        <authorList>
            <person name="Pirruccello M."/>
            <person name="De Camilli P."/>
        </authorList>
    </citation>
    <scope>REVIEW</scope>
</reference>
<reference key="21">
    <citation type="journal article" date="2015" name="J. Cell Biol.">
        <title>Sac2/INPP5F is an inositol 4-phosphatase that functions in the endocytic pathway.</title>
        <authorList>
            <person name="Nakatsu F."/>
            <person name="Messa M."/>
            <person name="Nandez R."/>
            <person name="Czapla H."/>
            <person name="Zou Y."/>
            <person name="Strittmatter S.M."/>
            <person name="De Camilli P."/>
        </authorList>
    </citation>
    <scope>FUNCTION</scope>
    <scope>SUBCELLULAR LOCATION</scope>
    <scope>INTERACTION WITH INPP5F AND RAB5A</scope>
</reference>
<reference key="22">
    <citation type="journal article" date="2019" name="Structure">
        <title>Rab35/ACAP2 and Rab35/RUSC2 Complex Structures Reveal Molecular Basis for Effector Recognition by Rab35 GTPase.</title>
        <authorList>
            <person name="Lin L."/>
            <person name="Shi Y."/>
            <person name="Wang M."/>
            <person name="Wang C."/>
            <person name="Zhu J."/>
            <person name="Zhang R."/>
        </authorList>
    </citation>
    <scope>INTERACTION WITH RAB35</scope>
</reference>
<reference key="23">
    <citation type="journal article" date="2009" name="EMBO J.">
        <title>A PH domain within OCRL bridges clathrin-mediated membrane trafficking to phosphoinositide metabolism.</title>
        <authorList>
            <person name="Mao Y."/>
            <person name="Balkin D.M."/>
            <person name="Zoncu R."/>
            <person name="Erdmann K.S."/>
            <person name="Tomasini L."/>
            <person name="Hu F."/>
            <person name="Jin M.M."/>
            <person name="Hodsdon M.E."/>
            <person name="De Camilli P."/>
        </authorList>
    </citation>
    <scope>STRUCTURE BY NMR OF 1-119</scope>
    <scope>DOMAIN PH</scope>
    <scope>INTERACTION WITH CLATHRIN</scope>
    <scope>SUBCELLULAR LOCATION</scope>
</reference>
<reference key="24">
    <citation type="journal article" date="2011" name="EMBO J.">
        <title>A structural basis for Lowe syndrome caused by mutations in the Rab-binding domain of OCRL1.</title>
        <authorList>
            <person name="Hou X."/>
            <person name="Hagemann N."/>
            <person name="Schoebel S."/>
            <person name="Blankenfeldt W."/>
            <person name="Goody R.S."/>
            <person name="Erdmann K.S."/>
            <person name="Itzen A."/>
        </authorList>
    </citation>
    <scope>X-RAY CRYSTALLOGRAPHY (2.0 ANGSTROMS) OF 540-678 IN COMPLEX WITH RAB8A</scope>
</reference>
<reference key="25">
    <citation type="journal article" date="2007" name="Dev. Cell">
        <title>A role of the Lowe syndrome protein OCRL in early steps of the endocytic pathway.</title>
        <authorList>
            <person name="Erdmann K.S."/>
            <person name="Mao Y."/>
            <person name="McCrea H.J."/>
            <person name="Zoncu R."/>
            <person name="Lee S."/>
            <person name="Paradise S."/>
            <person name="Modregger J."/>
            <person name="Biemesderfer D."/>
            <person name="Toomre D."/>
            <person name="De Camilli P."/>
        </authorList>
    </citation>
    <scope>X-RAY CRYSTALLOGRAPHY (2.4 ANGSTROMS) OF 564-901</scope>
    <scope>SUBCELLULAR LOCATION</scope>
    <scope>INTERACTION WITH APPL1</scope>
</reference>
<reference key="26">
    <citation type="journal article" date="2011" name="Nat. Struct. Mol. Biol.">
        <title>Recognition of the F&amp;H motif by the Lowe syndrome protein OCRL.</title>
        <authorList>
            <person name="Pirruccello M."/>
            <person name="Swan L.E."/>
            <person name="Folta-Stogniew E."/>
            <person name="De Camilli P."/>
        </authorList>
    </citation>
    <scope>X-RAY CRYSTALLOGRAPHY (2.3 ANGSTROMS) OF 536-901 IN COMPLEX WITH PHETA1</scope>
</reference>
<reference key="27">
    <citation type="journal article" date="1997" name="Am. J. Hum. Genet.">
        <title>Spectrum of mutations in the OCRL1 gene in the Lowe oculocerebrorenal syndrome.</title>
        <authorList>
            <person name="Lin T."/>
            <person name="Orrison B.M."/>
            <person name="Leahey A.-M."/>
            <person name="Suchy S.F."/>
            <person name="Bernard D.J."/>
            <person name="Lewis R.A."/>
            <person name="Nussbaum R.L."/>
        </authorList>
    </citation>
    <scope>VARIANTS OCRL THR-367 DEL; GLY-451; SER-463 AND ARG-524</scope>
</reference>
<reference key="28">
    <citation type="journal article" date="1998" name="Mol. Genet. Metab.">
        <title>Mutations are not uniformly distributed throughout the OCRL1 gene in Lowe syndrome patients.</title>
        <authorList>
            <person name="Lin T."/>
            <person name="Orrison B.M."/>
            <person name="Suchy S.F."/>
            <person name="Lewis R.A."/>
            <person name="Nussbaum R.L."/>
        </authorList>
    </citation>
    <scope>VARIANTS OCRL TYR-375; GLN-500; ASP-508 AND CYS-513</scope>
</reference>
<reference key="29">
    <citation type="journal article" date="1998" name="Am. J. Med. Genet.">
        <title>Oculocerebrorenal syndrome of Lowe: three mutations in the OCRL1 gene derived from three patients with different phenotypes.</title>
        <authorList>
            <person name="Kawano T."/>
            <person name="Indo Y."/>
            <person name="Nakazato H."/>
            <person name="Shimadzu M."/>
            <person name="Matsuda I."/>
        </authorList>
    </citation>
    <scope>VARIANTS OCRL GLN-500 AND GLN-524</scope>
</reference>
<reference key="30">
    <citation type="journal article" date="1998" name="Clin. Genet.">
        <title>Identification of two novel mutations in the OCRL1 gene in Japanese families with Lowe syndrome.</title>
        <authorList>
            <person name="Kubota T."/>
            <person name="Sakurai A."/>
            <person name="Arakawa K."/>
            <person name="Shimazu M."/>
            <person name="Wakui K."/>
            <person name="Furihata K."/>
            <person name="Fukushima Y."/>
        </authorList>
    </citation>
    <scope>VARIANT OCRL ARG-522</scope>
</reference>
<reference key="31">
    <citation type="journal article" date="2000" name="Hum. Mutat.">
        <title>OCRL1 mutation analysis in French Lowe syndrome patients: implications for molecular diagnosis strategy and genetic counseling.</title>
        <authorList>
            <person name="Monnier N."/>
            <person name="Satre V."/>
            <person name="Lerouge E."/>
            <person name="Berthoin F."/>
            <person name="Lunardi J."/>
        </authorList>
    </citation>
    <scope>VARIANTS OCRL GLU-357; GLU-421; ASP-424 AND TYR-498</scope>
</reference>
<reference key="32">
    <citation type="journal article" date="2000" name="Mol. Genet. Metab.">
        <title>Carrier assessment in families with Lowe oculocerebrorenal syndrome: novel mutations in the OCRL1 gene and correlation of direct DNA diagnosis with ocular examination.</title>
        <authorList>
            <person name="Roeschinger W."/>
            <person name="Muntau A.C."/>
            <person name="Rudolph G."/>
            <person name="Roscher A.A."/>
            <person name="Kammerer S."/>
        </authorList>
    </citation>
    <scope>VARIANTS OCRL 478-LYS-TYR-479 DEL; GLN-500 AND LEU-526</scope>
</reference>
<reference key="33">
    <citation type="journal article" date="2005" name="Am. J. Hum. Genet.">
        <title>Dent disease with mutations in OCRL1.</title>
        <authorList>
            <person name="Hoopes R.R. Jr."/>
            <person name="Shrimpton A.E."/>
            <person name="Knohl S.J."/>
            <person name="Hueber P."/>
            <person name="Hoppe B."/>
            <person name="Matyus J."/>
            <person name="Simckes A."/>
            <person name="Tasic V."/>
            <person name="Toenshoff B."/>
            <person name="Suchy S.F."/>
            <person name="Nussbaum R.L."/>
            <person name="Scheinman S.J."/>
        </authorList>
    </citation>
    <scope>VARIANTS DENT2 CYS-318 AND CYS-479</scope>
</reference>
<reference key="34">
    <citation type="journal article" date="2007" name="Pediatr. Nephrol.">
        <title>OCRL1 mutations in patients with Dent disease phenotype in Japan.</title>
        <authorList>
            <person name="Sekine T."/>
            <person name="Nozu K."/>
            <person name="Iyengar R."/>
            <person name="Fu X.J."/>
            <person name="Matsuo M."/>
            <person name="Tanaka R."/>
            <person name="Iijima K."/>
            <person name="Matsui E."/>
            <person name="Harita Y."/>
            <person name="Inatomi J."/>
            <person name="Igarashi T."/>
        </authorList>
    </citation>
    <scope>VARIANTS DENT2 CYS-318 AND TRP-493</scope>
</reference>
<reference key="35">
    <citation type="journal article" date="2009" name="J. Child Neurol.">
        <title>Magnetic resonance imaging, magnetic resonance spectroscopy, and facial dysmorphism in a case of Lowe syndrome with novel OCRL1 gene mutation.</title>
        <authorList>
            <person name="Yuksel A."/>
            <person name="Karaca E."/>
            <person name="Albayram M.S."/>
        </authorList>
    </citation>
    <scope>VARIANT OCRL LYS-591</scope>
</reference>
<reference key="36">
    <citation type="journal article" date="2011" name="Hum. Mutat.">
        <title>From Lowe syndrome to Dent disease: correlations between mutations of the OCRL1 gene and clinical and biochemical phenotypes.</title>
        <authorList>
            <person name="Hichri H."/>
            <person name="Rendu J."/>
            <person name="Monnier N."/>
            <person name="Coutton C."/>
            <person name="Dorseuil O."/>
            <person name="Poussou R.V."/>
            <person name="Baujat G."/>
            <person name="Blanchard A."/>
            <person name="Nobili F."/>
            <person name="Ranchin B."/>
            <person name="Remesy M."/>
            <person name="Salomon R."/>
            <person name="Satre V."/>
            <person name="Lunardi J."/>
        </authorList>
    </citation>
    <scope>VARIANTS OCRL SER-242; THR-274; ARG-277; CYS-318; CYS-337; ILE-361; GLY-372; TYR-373; PHE-374; ARG-414; ASN-451; GLY-457; LYS-468; GLY-468; LEU-495; HIS-499; ARG-503; LYS-591; VAL-742 DEL; PRO-797; LEU-801 AND ARG-891</scope>
    <scope>VARIANTS DENT2 HIS-354 AND LEU-799</scope>
</reference>
<dbReference type="EC" id="3.1.3.36" evidence="4 7 24"/>
<dbReference type="EC" id="3.1.3.56" evidence="7 24"/>
<dbReference type="EC" id="3.1.3.86" evidence="4 7"/>
<dbReference type="EMBL" id="M88162">
    <property type="protein sequence ID" value="AAA59964.2"/>
    <property type="status" value="ALT_INIT"/>
    <property type="molecule type" value="mRNA"/>
</dbReference>
<dbReference type="EMBL" id="U57627">
    <property type="protein sequence ID" value="AAB03839.2"/>
    <property type="molecule type" value="mRNA"/>
</dbReference>
<dbReference type="EMBL" id="AK293107">
    <property type="protein sequence ID" value="BAF85796.1"/>
    <property type="molecule type" value="mRNA"/>
</dbReference>
<dbReference type="EMBL" id="AL022162">
    <property type="status" value="NOT_ANNOTATED_CDS"/>
    <property type="molecule type" value="Genomic_DNA"/>
</dbReference>
<dbReference type="EMBL" id="AL138745">
    <property type="status" value="NOT_ANNOTATED_CDS"/>
    <property type="molecule type" value="Genomic_DNA"/>
</dbReference>
<dbReference type="EMBL" id="AL662877">
    <property type="status" value="NOT_ANNOTATED_CDS"/>
    <property type="molecule type" value="Genomic_DNA"/>
</dbReference>
<dbReference type="EMBL" id="Z73496">
    <property type="status" value="NOT_ANNOTATED_CDS"/>
    <property type="molecule type" value="Genomic_DNA"/>
</dbReference>
<dbReference type="EMBL" id="CH471107">
    <property type="protein sequence ID" value="EAX11831.1"/>
    <property type="molecule type" value="Genomic_DNA"/>
</dbReference>
<dbReference type="EMBL" id="CH471107">
    <property type="protein sequence ID" value="EAX11832.1"/>
    <property type="molecule type" value="Genomic_DNA"/>
</dbReference>
<dbReference type="EMBL" id="BC130612">
    <property type="protein sequence ID" value="AAI30613.1"/>
    <property type="molecule type" value="mRNA"/>
</dbReference>
<dbReference type="EMBL" id="BC144106">
    <property type="protein sequence ID" value="AAI44107.1"/>
    <property type="molecule type" value="mRNA"/>
</dbReference>
<dbReference type="EMBL" id="S62085">
    <property type="protein sequence ID" value="AAB26926.1"/>
    <property type="molecule type" value="mRNA"/>
</dbReference>
<dbReference type="CCDS" id="CCDS35393.1">
    <molecule id="Q01968-1"/>
</dbReference>
<dbReference type="CCDS" id="CCDS35394.1">
    <molecule id="Q01968-2"/>
</dbReference>
<dbReference type="PIR" id="S29069">
    <property type="entry name" value="S29069"/>
</dbReference>
<dbReference type="RefSeq" id="NP_000267.2">
    <molecule id="Q01968-1"/>
    <property type="nucleotide sequence ID" value="NM_000276.3"/>
</dbReference>
<dbReference type="RefSeq" id="NP_001578.2">
    <molecule id="Q01968-2"/>
    <property type="nucleotide sequence ID" value="NM_001587.3"/>
</dbReference>
<dbReference type="PDB" id="2KIE">
    <property type="method" value="NMR"/>
    <property type="chains" value="A=1-119"/>
</dbReference>
<dbReference type="PDB" id="2QV2">
    <property type="method" value="X-ray"/>
    <property type="resolution" value="2.40 A"/>
    <property type="chains" value="A=564-901"/>
</dbReference>
<dbReference type="PDB" id="3QBT">
    <property type="method" value="X-ray"/>
    <property type="resolution" value="2.00 A"/>
    <property type="chains" value="B/D/F/H=540-678"/>
</dbReference>
<dbReference type="PDB" id="3QIS">
    <property type="method" value="X-ray"/>
    <property type="resolution" value="2.30 A"/>
    <property type="chains" value="A=536-901"/>
</dbReference>
<dbReference type="PDB" id="4CMN">
    <property type="method" value="X-ray"/>
    <property type="resolution" value="3.13 A"/>
    <property type="chains" value="A=215-560"/>
</dbReference>
<dbReference type="PDBsum" id="2KIE"/>
<dbReference type="PDBsum" id="2QV2"/>
<dbReference type="PDBsum" id="3QBT"/>
<dbReference type="PDBsum" id="3QIS"/>
<dbReference type="PDBsum" id="4CMN"/>
<dbReference type="SMR" id="Q01968"/>
<dbReference type="BioGRID" id="111006">
    <property type="interactions" value="176"/>
</dbReference>
<dbReference type="DIP" id="DIP-45092N"/>
<dbReference type="FunCoup" id="Q01968">
    <property type="interactions" value="2051"/>
</dbReference>
<dbReference type="IntAct" id="Q01968">
    <property type="interactions" value="227"/>
</dbReference>
<dbReference type="MINT" id="Q01968"/>
<dbReference type="STRING" id="9606.ENSP00000360154"/>
<dbReference type="SwissLipids" id="SLP:000001182"/>
<dbReference type="DEPOD" id="OCRL"/>
<dbReference type="GlyGen" id="Q01968">
    <property type="glycosylation" value="1 site, 1 O-linked glycan (1 site)"/>
</dbReference>
<dbReference type="iPTMnet" id="Q01968"/>
<dbReference type="MetOSite" id="Q01968"/>
<dbReference type="PhosphoSitePlus" id="Q01968"/>
<dbReference type="BioMuta" id="OCRL"/>
<dbReference type="DMDM" id="67477390"/>
<dbReference type="jPOST" id="Q01968"/>
<dbReference type="MassIVE" id="Q01968"/>
<dbReference type="PaxDb" id="9606-ENSP00000360154"/>
<dbReference type="PeptideAtlas" id="Q01968"/>
<dbReference type="ProteomicsDB" id="58022">
    <molecule id="Q01968-1"/>
</dbReference>
<dbReference type="ProteomicsDB" id="58023">
    <molecule id="Q01968-2"/>
</dbReference>
<dbReference type="Pumba" id="Q01968"/>
<dbReference type="TopDownProteomics" id="Q01968-2">
    <molecule id="Q01968-2"/>
</dbReference>
<dbReference type="ABCD" id="Q01968">
    <property type="antibodies" value="1 sequenced antibody"/>
</dbReference>
<dbReference type="Antibodypedia" id="509">
    <property type="antibodies" value="337 antibodies from 35 providers"/>
</dbReference>
<dbReference type="DNASU" id="4952"/>
<dbReference type="Ensembl" id="ENST00000357121.5">
    <molecule id="Q01968-2"/>
    <property type="protein sequence ID" value="ENSP00000349635.5"/>
    <property type="gene ID" value="ENSG00000122126.18"/>
</dbReference>
<dbReference type="Ensembl" id="ENST00000371113.9">
    <molecule id="Q01968-1"/>
    <property type="protein sequence ID" value="ENSP00000360154.4"/>
    <property type="gene ID" value="ENSG00000122126.18"/>
</dbReference>
<dbReference type="GeneID" id="4952"/>
<dbReference type="KEGG" id="hsa:4952"/>
<dbReference type="MANE-Select" id="ENST00000371113.9">
    <property type="protein sequence ID" value="ENSP00000360154.4"/>
    <property type="RefSeq nucleotide sequence ID" value="NM_000276.4"/>
    <property type="RefSeq protein sequence ID" value="NP_000267.2"/>
</dbReference>
<dbReference type="UCSC" id="uc004euq.4">
    <molecule id="Q01968-1"/>
    <property type="organism name" value="human"/>
</dbReference>
<dbReference type="AGR" id="HGNC:8108"/>
<dbReference type="CTD" id="4952"/>
<dbReference type="DisGeNET" id="4952"/>
<dbReference type="GeneCards" id="OCRL"/>
<dbReference type="GeneReviews" id="OCRL"/>
<dbReference type="HGNC" id="HGNC:8108">
    <property type="gene designation" value="OCRL"/>
</dbReference>
<dbReference type="HPA" id="ENSG00000122126">
    <property type="expression patterns" value="Low tissue specificity"/>
</dbReference>
<dbReference type="MalaCards" id="OCRL"/>
<dbReference type="MIM" id="300535">
    <property type="type" value="gene"/>
</dbReference>
<dbReference type="MIM" id="300555">
    <property type="type" value="phenotype"/>
</dbReference>
<dbReference type="MIM" id="309000">
    <property type="type" value="phenotype"/>
</dbReference>
<dbReference type="neXtProt" id="NX_Q01968"/>
<dbReference type="OpenTargets" id="ENSG00000122126"/>
<dbReference type="Orphanet" id="93623">
    <property type="disease" value="Dent disease type 2"/>
</dbReference>
<dbReference type="Orphanet" id="534">
    <property type="disease" value="Oculocerebrorenal syndrome of Lowe"/>
</dbReference>
<dbReference type="PharmGKB" id="PA31896"/>
<dbReference type="VEuPathDB" id="HostDB:ENSG00000122126"/>
<dbReference type="eggNOG" id="KOG0565">
    <property type="taxonomic scope" value="Eukaryota"/>
</dbReference>
<dbReference type="GeneTree" id="ENSGT00940000157996"/>
<dbReference type="HOGENOM" id="CLU_006779_3_1_1"/>
<dbReference type="InParanoid" id="Q01968"/>
<dbReference type="OMA" id="WLGCSER"/>
<dbReference type="OrthoDB" id="7862313at2759"/>
<dbReference type="PAN-GO" id="Q01968">
    <property type="GO annotations" value="5 GO annotations based on evolutionary models"/>
</dbReference>
<dbReference type="PhylomeDB" id="Q01968"/>
<dbReference type="TreeFam" id="TF317034"/>
<dbReference type="BioCyc" id="MetaCyc:HS04546-MONOMER"/>
<dbReference type="BRENDA" id="3.1.3.36">
    <property type="organism ID" value="2681"/>
</dbReference>
<dbReference type="PathwayCommons" id="Q01968"/>
<dbReference type="Reactome" id="R-HSA-1660499">
    <property type="pathway name" value="Synthesis of PIPs at the plasma membrane"/>
</dbReference>
<dbReference type="Reactome" id="R-HSA-1660514">
    <property type="pathway name" value="Synthesis of PIPs at the Golgi membrane"/>
</dbReference>
<dbReference type="Reactome" id="R-HSA-1855183">
    <property type="pathway name" value="Synthesis of IP2, IP, and Ins in the cytosol"/>
</dbReference>
<dbReference type="Reactome" id="R-HSA-1855204">
    <property type="pathway name" value="Synthesis of IP3 and IP4 in the cytosol"/>
</dbReference>
<dbReference type="Reactome" id="R-HSA-432722">
    <property type="pathway name" value="Golgi Associated Vesicle Biogenesis"/>
</dbReference>
<dbReference type="Reactome" id="R-HSA-8856828">
    <property type="pathway name" value="Clathrin-mediated endocytosis"/>
</dbReference>
<dbReference type="Reactome" id="R-HSA-9013409">
    <property type="pathway name" value="RHOJ GTPase cycle"/>
</dbReference>
<dbReference type="Reactome" id="R-HSA-9013423">
    <property type="pathway name" value="RAC3 GTPase cycle"/>
</dbReference>
<dbReference type="SignaLink" id="Q01968"/>
<dbReference type="SIGNOR" id="Q01968"/>
<dbReference type="BioGRID-ORCS" id="4952">
    <property type="hits" value="10 hits in 797 CRISPR screens"/>
</dbReference>
<dbReference type="ChiTaRS" id="OCRL">
    <property type="organism name" value="human"/>
</dbReference>
<dbReference type="EvolutionaryTrace" id="Q01968"/>
<dbReference type="GeneWiki" id="OCRL"/>
<dbReference type="GenomeRNAi" id="4952"/>
<dbReference type="Pharos" id="Q01968">
    <property type="development level" value="Tbio"/>
</dbReference>
<dbReference type="PRO" id="PR:Q01968"/>
<dbReference type="Proteomes" id="UP000005640">
    <property type="component" value="Chromosome X"/>
</dbReference>
<dbReference type="RNAct" id="Q01968">
    <property type="molecule type" value="protein"/>
</dbReference>
<dbReference type="Bgee" id="ENSG00000122126">
    <property type="expression patterns" value="Expressed in endometrium epithelium and 143 other cell types or tissues"/>
</dbReference>
<dbReference type="ExpressionAtlas" id="Q01968">
    <property type="expression patterns" value="baseline and differential"/>
</dbReference>
<dbReference type="GO" id="GO:0034451">
    <property type="term" value="C:centriolar satellite"/>
    <property type="evidence" value="ECO:0000314"/>
    <property type="project" value="HPA"/>
</dbReference>
<dbReference type="GO" id="GO:0036064">
    <property type="term" value="C:ciliary basal body"/>
    <property type="evidence" value="ECO:0000314"/>
    <property type="project" value="HPA"/>
</dbReference>
<dbReference type="GO" id="GO:0005929">
    <property type="term" value="C:cilium"/>
    <property type="evidence" value="ECO:0000314"/>
    <property type="project" value="HPA"/>
</dbReference>
<dbReference type="GO" id="GO:0005905">
    <property type="term" value="C:clathrin-coated pit"/>
    <property type="evidence" value="ECO:0007669"/>
    <property type="project" value="UniProtKB-SubCell"/>
</dbReference>
<dbReference type="GO" id="GO:0030136">
    <property type="term" value="C:clathrin-coated vesicle"/>
    <property type="evidence" value="ECO:0000314"/>
    <property type="project" value="UniProtKB"/>
</dbReference>
<dbReference type="GO" id="GO:0005737">
    <property type="term" value="C:cytoplasm"/>
    <property type="evidence" value="ECO:0000314"/>
    <property type="project" value="FlyBase"/>
</dbReference>
<dbReference type="GO" id="GO:0005829">
    <property type="term" value="C:cytosol"/>
    <property type="evidence" value="ECO:0000314"/>
    <property type="project" value="HPA"/>
</dbReference>
<dbReference type="GO" id="GO:0005769">
    <property type="term" value="C:early endosome"/>
    <property type="evidence" value="ECO:0000314"/>
    <property type="project" value="UniProtKB"/>
</dbReference>
<dbReference type="GO" id="GO:0031901">
    <property type="term" value="C:early endosome membrane"/>
    <property type="evidence" value="ECO:0007669"/>
    <property type="project" value="UniProtKB-SubCell"/>
</dbReference>
<dbReference type="GO" id="GO:0005795">
    <property type="term" value="C:Golgi stack"/>
    <property type="evidence" value="ECO:0000304"/>
    <property type="project" value="ProtInc"/>
</dbReference>
<dbReference type="GO" id="GO:0005798">
    <property type="term" value="C:Golgi-associated vesicle"/>
    <property type="evidence" value="ECO:0000304"/>
    <property type="project" value="ProtInc"/>
</dbReference>
<dbReference type="GO" id="GO:0005764">
    <property type="term" value="C:lysosome"/>
    <property type="evidence" value="ECO:0007669"/>
    <property type="project" value="UniProtKB-SubCell"/>
</dbReference>
<dbReference type="GO" id="GO:0016020">
    <property type="term" value="C:membrane"/>
    <property type="evidence" value="ECO:0000318"/>
    <property type="project" value="GO_Central"/>
</dbReference>
<dbReference type="GO" id="GO:0015630">
    <property type="term" value="C:microtubule cytoskeleton"/>
    <property type="evidence" value="ECO:0000314"/>
    <property type="project" value="HPA"/>
</dbReference>
<dbReference type="GO" id="GO:0043005">
    <property type="term" value="C:neuron projection"/>
    <property type="evidence" value="ECO:0000318"/>
    <property type="project" value="GO_Central"/>
</dbReference>
<dbReference type="GO" id="GO:0005634">
    <property type="term" value="C:nucleus"/>
    <property type="evidence" value="ECO:0000314"/>
    <property type="project" value="FlyBase"/>
</dbReference>
<dbReference type="GO" id="GO:0030670">
    <property type="term" value="C:phagocytic vesicle membrane"/>
    <property type="evidence" value="ECO:0007669"/>
    <property type="project" value="UniProtKB-SubCell"/>
</dbReference>
<dbReference type="GO" id="GO:0001750">
    <property type="term" value="C:photoreceptor outer segment"/>
    <property type="evidence" value="ECO:0000314"/>
    <property type="project" value="UniProtKB"/>
</dbReference>
<dbReference type="GO" id="GO:0005886">
    <property type="term" value="C:plasma membrane"/>
    <property type="evidence" value="ECO:0000314"/>
    <property type="project" value="FlyBase"/>
</dbReference>
<dbReference type="GO" id="GO:0005802">
    <property type="term" value="C:trans-Golgi network"/>
    <property type="evidence" value="ECO:0000314"/>
    <property type="project" value="FlyBase"/>
</dbReference>
<dbReference type="GO" id="GO:0005096">
    <property type="term" value="F:GTPase activator activity"/>
    <property type="evidence" value="ECO:0000314"/>
    <property type="project" value="FlyBase"/>
</dbReference>
<dbReference type="GO" id="GO:0052745">
    <property type="term" value="F:inositol phosphate phosphatase activity"/>
    <property type="evidence" value="ECO:0000314"/>
    <property type="project" value="UniProtKB"/>
</dbReference>
<dbReference type="GO" id="GO:0052659">
    <property type="term" value="F:inositol-1,3,4,5-tetrakisphosphate 5-phosphatase activity"/>
    <property type="evidence" value="ECO:0007669"/>
    <property type="project" value="RHEA"/>
</dbReference>
<dbReference type="GO" id="GO:0052658">
    <property type="term" value="F:inositol-1,4,5-trisphosphate 5-phosphatase activity"/>
    <property type="evidence" value="ECO:0000304"/>
    <property type="project" value="Reactome"/>
</dbReference>
<dbReference type="GO" id="GO:0034596">
    <property type="term" value="F:phosphatidylinositol phosphate 4-phosphatase activity"/>
    <property type="evidence" value="ECO:0000304"/>
    <property type="project" value="Reactome"/>
</dbReference>
<dbReference type="GO" id="GO:0034485">
    <property type="term" value="F:phosphatidylinositol-3,4,5-trisphosphate 5-phosphatase activity"/>
    <property type="evidence" value="ECO:0007669"/>
    <property type="project" value="UniProtKB-EC"/>
</dbReference>
<dbReference type="GO" id="GO:0043813">
    <property type="term" value="F:phosphatidylinositol-3,5-bisphosphate 5-phosphatase activity"/>
    <property type="evidence" value="ECO:0000304"/>
    <property type="project" value="Reactome"/>
</dbReference>
<dbReference type="GO" id="GO:0004439">
    <property type="term" value="F:phosphatidylinositol-4,5-bisphosphate 5-phosphatase activity"/>
    <property type="evidence" value="ECO:0000318"/>
    <property type="project" value="GO_Central"/>
</dbReference>
<dbReference type="GO" id="GO:0031267">
    <property type="term" value="F:small GTPase binding"/>
    <property type="evidence" value="ECO:0000353"/>
    <property type="project" value="FlyBase"/>
</dbReference>
<dbReference type="GO" id="GO:0060271">
    <property type="term" value="P:cilium assembly"/>
    <property type="evidence" value="ECO:0000315"/>
    <property type="project" value="UniProtKB"/>
</dbReference>
<dbReference type="GO" id="GO:0001701">
    <property type="term" value="P:in utero embryonic development"/>
    <property type="evidence" value="ECO:0007669"/>
    <property type="project" value="Ensembl"/>
</dbReference>
<dbReference type="GO" id="GO:0043647">
    <property type="term" value="P:inositol phosphate metabolic process"/>
    <property type="evidence" value="ECO:0000304"/>
    <property type="project" value="Reactome"/>
</dbReference>
<dbReference type="GO" id="GO:0006629">
    <property type="term" value="P:lipid metabolic process"/>
    <property type="evidence" value="ECO:0000304"/>
    <property type="project" value="ProtInc"/>
</dbReference>
<dbReference type="GO" id="GO:0061024">
    <property type="term" value="P:membrane organization"/>
    <property type="evidence" value="ECO:0000304"/>
    <property type="project" value="Reactome"/>
</dbReference>
<dbReference type="GO" id="GO:0006661">
    <property type="term" value="P:phosphatidylinositol biosynthetic process"/>
    <property type="evidence" value="ECO:0000304"/>
    <property type="project" value="Reactome"/>
</dbReference>
<dbReference type="GO" id="GO:0046856">
    <property type="term" value="P:phosphatidylinositol dephosphorylation"/>
    <property type="evidence" value="ECO:0007669"/>
    <property type="project" value="Ensembl"/>
</dbReference>
<dbReference type="GO" id="GO:0007165">
    <property type="term" value="P:signal transduction"/>
    <property type="evidence" value="ECO:0007669"/>
    <property type="project" value="InterPro"/>
</dbReference>
<dbReference type="CDD" id="cd09093">
    <property type="entry name" value="INPP5c_INPP5B"/>
    <property type="match status" value="1"/>
</dbReference>
<dbReference type="CDD" id="cd13382">
    <property type="entry name" value="PH_OCRL1"/>
    <property type="match status" value="1"/>
</dbReference>
<dbReference type="CDD" id="cd04380">
    <property type="entry name" value="RhoGAP_OCRL1"/>
    <property type="match status" value="1"/>
</dbReference>
<dbReference type="FunFam" id="2.30.29.110:FF:000001">
    <property type="entry name" value="inositol polyphosphate 5-phosphatase OCRL-1"/>
    <property type="match status" value="1"/>
</dbReference>
<dbReference type="FunFam" id="2.60.40.10:FF:000132">
    <property type="entry name" value="Inositol polyphosphate 5-phosphatase OCRL-1 isoform b"/>
    <property type="match status" value="1"/>
</dbReference>
<dbReference type="FunFam" id="1.10.555.10:FF:000012">
    <property type="entry name" value="Putative inositol polyphosphate 5-phosphatase OCRL-1"/>
    <property type="match status" value="1"/>
</dbReference>
<dbReference type="FunFam" id="3.60.10.10:FF:000004">
    <property type="entry name" value="Type II inositol 1,4,5-trisphosphate 5-phosphatase"/>
    <property type="match status" value="1"/>
</dbReference>
<dbReference type="Gene3D" id="2.30.29.110">
    <property type="match status" value="1"/>
</dbReference>
<dbReference type="Gene3D" id="3.60.10.10">
    <property type="entry name" value="Endonuclease/exonuclease/phosphatase"/>
    <property type="match status" value="1"/>
</dbReference>
<dbReference type="Gene3D" id="2.60.40.10">
    <property type="entry name" value="Immunoglobulins"/>
    <property type="match status" value="1"/>
</dbReference>
<dbReference type="Gene3D" id="1.10.555.10">
    <property type="entry name" value="Rho GTPase activation protein"/>
    <property type="match status" value="1"/>
</dbReference>
<dbReference type="InterPro" id="IPR036691">
    <property type="entry name" value="Endo/exonu/phosph_ase_sf"/>
</dbReference>
<dbReference type="InterPro" id="IPR013783">
    <property type="entry name" value="Ig-like_fold"/>
</dbReference>
<dbReference type="InterPro" id="IPR046985">
    <property type="entry name" value="IP5"/>
</dbReference>
<dbReference type="InterPro" id="IPR000300">
    <property type="entry name" value="IPPc"/>
</dbReference>
<dbReference type="InterPro" id="IPR048869">
    <property type="entry name" value="OCRL-1_2_ASH"/>
</dbReference>
<dbReference type="InterPro" id="IPR037793">
    <property type="entry name" value="OCRL1/INPP5B_INPP5c"/>
</dbReference>
<dbReference type="InterPro" id="IPR037787">
    <property type="entry name" value="OCRL1_PH"/>
</dbReference>
<dbReference type="InterPro" id="IPR031995">
    <property type="entry name" value="OCRL_clath-bd"/>
</dbReference>
<dbReference type="InterPro" id="IPR008936">
    <property type="entry name" value="Rho_GTPase_activation_prot"/>
</dbReference>
<dbReference type="InterPro" id="IPR000198">
    <property type="entry name" value="RhoGAP_dom"/>
</dbReference>
<dbReference type="InterPro" id="IPR047078">
    <property type="entry name" value="RhoGAP_OCRL1"/>
</dbReference>
<dbReference type="PANTHER" id="PTHR11200">
    <property type="entry name" value="INOSITOL 5-PHOSPHATASE"/>
    <property type="match status" value="1"/>
</dbReference>
<dbReference type="PANTHER" id="PTHR11200:SF176">
    <property type="entry name" value="INOSITOL POLYPHOSPHATE 5-PHOSPHATASE OCRL"/>
    <property type="match status" value="1"/>
</dbReference>
<dbReference type="Pfam" id="PF22669">
    <property type="entry name" value="Exo_endo_phos2"/>
    <property type="match status" value="1"/>
</dbReference>
<dbReference type="Pfam" id="PF21310">
    <property type="entry name" value="OCRL-like_ASH"/>
    <property type="match status" value="1"/>
</dbReference>
<dbReference type="Pfam" id="PF16726">
    <property type="entry name" value="OCRL_clath_bd"/>
    <property type="match status" value="1"/>
</dbReference>
<dbReference type="Pfam" id="PF00620">
    <property type="entry name" value="RhoGAP"/>
    <property type="match status" value="1"/>
</dbReference>
<dbReference type="SMART" id="SM00128">
    <property type="entry name" value="IPPc"/>
    <property type="match status" value="1"/>
</dbReference>
<dbReference type="SMART" id="SM00324">
    <property type="entry name" value="RhoGAP"/>
    <property type="match status" value="1"/>
</dbReference>
<dbReference type="SUPFAM" id="SSF56219">
    <property type="entry name" value="DNase I-like"/>
    <property type="match status" value="1"/>
</dbReference>
<dbReference type="SUPFAM" id="SSF48350">
    <property type="entry name" value="GTPase activation domain, GAP"/>
    <property type="match status" value="1"/>
</dbReference>
<dbReference type="PROSITE" id="PS50238">
    <property type="entry name" value="RHOGAP"/>
    <property type="match status" value="1"/>
</dbReference>
<gene>
    <name evidence="35" type="primary">OCRL</name>
    <name evidence="33" type="synonym">OCRL1</name>
</gene>
<accession>Q01968</accession>
<accession>A6NKI1</accession>
<accession>A8KAP2</accession>
<accession>B7ZLX2</accession>
<accession>O60800</accession>
<accession>Q15684</accession>
<accession>Q15774</accession>
<accession>Q4VY09</accession>
<accession>Q4VY10</accession>
<accession>Q5JQF1</accession>
<accession>Q5JQF2</accession>
<accession>Q9UJG5</accession>
<accession>Q9UMA5</accession>
<feature type="chain" id="PRO_0000209721" description="Inositol polyphosphate 5-phosphatase OCRL">
    <location>
        <begin position="1"/>
        <end position="901"/>
    </location>
</feature>
<feature type="domain" description="PH">
    <location>
        <begin position="1"/>
        <end position="119"/>
    </location>
</feature>
<feature type="domain" description="Rho-GAP" evidence="2">
    <location>
        <begin position="721"/>
        <end position="901"/>
    </location>
</feature>
<feature type="region of interest" description="Disordered" evidence="3">
    <location>
        <begin position="164"/>
        <end position="186"/>
    </location>
</feature>
<feature type="region of interest" description="5-phosphatase">
    <location>
        <begin position="237"/>
        <end position="563"/>
    </location>
</feature>
<feature type="region of interest" description="ASH">
    <location>
        <begin position="564"/>
        <end position="678"/>
    </location>
</feature>
<feature type="short sequence motif" description="Clathrin box 1">
    <location>
        <begin position="73"/>
        <end position="77"/>
    </location>
</feature>
<feature type="short sequence motif" description="Clathrin box 2">
    <location>
        <begin position="702"/>
        <end position="706"/>
    </location>
</feature>
<feature type="site" description="Arginine finger; crucial for GTP hydrolysis by stabilizing the transition state" evidence="2">
    <location>
        <position position="757"/>
    </location>
</feature>
<feature type="splice variant" id="VSP_002681" description="In isoform B." evidence="30 31">
    <location>
        <begin position="707"/>
        <end position="714"/>
    </location>
</feature>
<feature type="sequence variant" id="VAR_064773" description="In OCRL; dbSNP:rs137853828." evidence="14">
    <original>F</original>
    <variation>S</variation>
    <location>
        <position position="242"/>
    </location>
</feature>
<feature type="sequence variant" id="VAR_064774" description="In OCRL; dbSNP:rs137853829." evidence="14">
    <original>I</original>
    <variation>T</variation>
    <location>
        <position position="274"/>
    </location>
</feature>
<feature type="sequence variant" id="VAR_064775" description="In OCRL; dbSNP:rs137853830." evidence="14">
    <original>Q</original>
    <variation>R</variation>
    <location>
        <position position="277"/>
    </location>
</feature>
<feature type="sequence variant" id="VAR_022698" description="In DENT2 and OCRL; dbSNP:rs137853263." evidence="8 9 14">
    <original>R</original>
    <variation>C</variation>
    <location>
        <position position="318"/>
    </location>
</feature>
<feature type="sequence variant" id="VAR_064776" description="In OCRL; associated in cis with I-361; dbSNP:rs137853831." evidence="14">
    <original>R</original>
    <variation>C</variation>
    <location>
        <position position="337"/>
    </location>
</feature>
<feature type="sequence variant" id="VAR_010169" description="In OCRL.">
    <original>R</original>
    <variation>P</variation>
    <location>
        <position position="337"/>
    </location>
</feature>
<feature type="sequence variant" id="VAR_064777" description="In DENT2; dbSNP:rs137853833." evidence="14">
    <original>N</original>
    <variation>H</variation>
    <location>
        <position position="354"/>
    </location>
</feature>
<feature type="sequence variant" id="VAR_010170" description="In OCRL; uncertain significance; dbSNP:rs137853854." evidence="6">
    <original>G</original>
    <variation>E</variation>
    <location>
        <position position="357"/>
    </location>
</feature>
<feature type="sequence variant" id="VAR_064778" description="In OCRL; associated in cis with C-337; dbSNP:rs137853832." evidence="14">
    <original>R</original>
    <variation>I</variation>
    <location>
        <position position="361"/>
    </location>
</feature>
<feature type="sequence variant" id="VAR_010171" description="In OCRL." evidence="25">
    <location>
        <position position="367"/>
    </location>
</feature>
<feature type="sequence variant" id="VAR_010172" description="In OCRL; dbSNP:rs137853834." evidence="14">
    <original>V</original>
    <variation>G</variation>
    <location>
        <position position="372"/>
    </location>
</feature>
<feature type="sequence variant" id="VAR_064779" description="In OCRL; dbSNP:rs137853835." evidence="14">
    <original>N</original>
    <variation>Y</variation>
    <location>
        <position position="373"/>
    </location>
</feature>
<feature type="sequence variant" id="VAR_064780" description="In OCRL; dbSNP:rs137853836." evidence="14">
    <original>S</original>
    <variation>F</variation>
    <location>
        <position position="374"/>
    </location>
</feature>
<feature type="sequence variant" id="VAR_010173" description="In OCRL; dbSNP:rs137853848." evidence="28">
    <original>H</original>
    <variation>Y</variation>
    <location>
        <position position="375"/>
    </location>
</feature>
<feature type="sequence variant" id="VAR_064781" description="In OCRL; dbSNP:rs137853837." evidence="14">
    <original>H</original>
    <variation>R</variation>
    <location>
        <position position="414"/>
    </location>
</feature>
<feature type="sequence variant" id="VAR_010174" description="In OCRL; dbSNP:rs137853855." evidence="6">
    <original>G</original>
    <variation>E</variation>
    <location>
        <position position="421"/>
    </location>
</feature>
<feature type="sequence variant" id="VAR_010175" description="In OCRL; dbSNP:rs137853856." evidence="6">
    <original>N</original>
    <variation>D</variation>
    <location>
        <position position="424"/>
    </location>
</feature>
<feature type="sequence variant" id="VAR_010176" description="In OCRL; dbSNP:rs137853850." evidence="25">
    <original>D</original>
    <variation>G</variation>
    <location>
        <position position="451"/>
    </location>
</feature>
<feature type="sequence variant" id="VAR_064782" description="In OCRL; dbSNP:rs137853838." evidence="14">
    <original>D</original>
    <variation>N</variation>
    <location>
        <position position="451"/>
    </location>
</feature>
<feature type="sequence variant" id="VAR_064783" description="In OCRL; dbSNP:rs137853839." evidence="14">
    <original>R</original>
    <variation>G</variation>
    <location>
        <position position="457"/>
    </location>
</feature>
<feature type="sequence variant" id="VAR_010177" description="In OCRL; dbSNP:rs137853851." evidence="25">
    <original>F</original>
    <variation>S</variation>
    <location>
        <position position="463"/>
    </location>
</feature>
<feature type="sequence variant" id="VAR_064784" description="In OCRL; dbSNP:rs137853841." evidence="14">
    <original>E</original>
    <variation>G</variation>
    <location>
        <position position="468"/>
    </location>
</feature>
<feature type="sequence variant" id="VAR_064785" description="In OCRL; dbSNP:rs137853840." evidence="14">
    <original>E</original>
    <variation>K</variation>
    <location>
        <position position="468"/>
    </location>
</feature>
<feature type="sequence variant" id="VAR_023957" description="In OCRL." evidence="5">
    <location>
        <begin position="478"/>
        <end position="479"/>
    </location>
</feature>
<feature type="sequence variant" id="VAR_022699" description="In DENT2; dbSNP:rs137853262." evidence="8">
    <original>Y</original>
    <variation>C</variation>
    <location>
        <position position="479"/>
    </location>
</feature>
<feature type="sequence variant" id="VAR_064786" description="In DENT2; dbSNP:rs137853846." evidence="9">
    <original>R</original>
    <variation>W</variation>
    <location>
        <position position="493"/>
    </location>
</feature>
<feature type="sequence variant" id="VAR_064787" description="In OCRL." evidence="14">
    <original>P</original>
    <variation>L</variation>
    <location>
        <position position="495"/>
    </location>
</feature>
<feature type="sequence variant" id="VAR_010178" description="In OCRL; dbSNP:rs137853857." evidence="6">
    <original>C</original>
    <variation>Y</variation>
    <location>
        <position position="498"/>
    </location>
</feature>
<feature type="sequence variant" id="VAR_064788" description="In OCRL; dbSNP:rs137853842." evidence="14">
    <original>D</original>
    <variation>H</variation>
    <location>
        <position position="499"/>
    </location>
</feature>
<feature type="sequence variant" id="VAR_010179" description="In OCRL; dbSNP:rs398123287.">
    <original>R</original>
    <variation>G</variation>
    <location>
        <position position="500"/>
    </location>
</feature>
<feature type="sequence variant" id="VAR_010180" description="In OCRL; dbSNP:rs137853260." evidence="5 27 28">
    <original>R</original>
    <variation>Q</variation>
    <location>
        <position position="500"/>
    </location>
</feature>
<feature type="sequence variant" id="VAR_064789" description="In OCRL; dbSNP:rs137853843." evidence="14">
    <original>W</original>
    <variation>R</variation>
    <location>
        <position position="503"/>
    </location>
</feature>
<feature type="sequence variant" id="VAR_010181" description="In OCRL; dbSNP:rs137853849." evidence="28">
    <original>V</original>
    <variation>D</variation>
    <location>
        <position position="508"/>
    </location>
</feature>
<feature type="sequence variant" id="VAR_010182" description="In OCRL; dbSNP:rs137853847." evidence="28">
    <original>Y</original>
    <variation>C</variation>
    <location>
        <position position="513"/>
    </location>
</feature>
<feature type="sequence variant" id="VAR_010183" description="In OCRL; dbSNP:rs137853853." evidence="29">
    <original>S</original>
    <variation>R</variation>
    <location>
        <position position="522"/>
    </location>
</feature>
<feature type="sequence variant" id="VAR_010184" description="In OCRL; dbSNP:rs137853261." evidence="27">
    <original>H</original>
    <variation>Q</variation>
    <location>
        <position position="524"/>
    </location>
</feature>
<feature type="sequence variant" id="VAR_010185" description="In OCRL; dbSNP:rs137853852." evidence="25">
    <original>H</original>
    <variation>R</variation>
    <location>
        <position position="524"/>
    </location>
</feature>
<feature type="sequence variant" id="VAR_023958" description="In OCRL; dbSNP:rs137853858." evidence="5">
    <original>P</original>
    <variation>L</variation>
    <location>
        <position position="526"/>
    </location>
</feature>
<feature type="sequence variant" id="VAR_010187" description="In OCRL.">
    <original>I</original>
    <variation>S</variation>
    <location>
        <position position="533"/>
    </location>
</feature>
<feature type="sequence variant" id="VAR_064790" description="In OCRL; dbSNP:rs137853844." evidence="11 14">
    <original>N</original>
    <variation>K</variation>
    <location>
        <position position="591"/>
    </location>
</feature>
<feature type="sequence variant" id="VAR_064791" description="In OCRL." evidence="14">
    <location>
        <position position="742"/>
    </location>
</feature>
<feature type="sequence variant" id="VAR_010188" description="In OCRL; uncertain significance; abolishes PHETA1-, PHETA2- and APPL1-binding." evidence="13 15">
    <original>I</original>
    <variation>N</variation>
    <location>
        <position position="768"/>
    </location>
</feature>
<feature type="sequence variant" id="VAR_010189" description="In OCRL; uncertain significance; dbSNP:rs935956958." evidence="13 14">
    <original>A</original>
    <variation>P</variation>
    <location>
        <position position="797"/>
    </location>
</feature>
<feature type="sequence variant" id="VAR_064792" description="In DENT2." evidence="14">
    <original>P</original>
    <variation>L</variation>
    <location>
        <position position="799"/>
    </location>
</feature>
<feature type="sequence variant" id="VAR_064793" description="In OCRL." evidence="14">
    <original>P</original>
    <variation>L</variation>
    <location>
        <position position="801"/>
    </location>
</feature>
<feature type="sequence variant" id="VAR_064794" description="In OCRL; dbSNP:rs137853845." evidence="14">
    <original>L</original>
    <variation>R</variation>
    <location>
        <position position="891"/>
    </location>
</feature>
<feature type="mutagenesis site" description="Does not affect interaction with RAB8A." evidence="21">
    <original>D</original>
    <variation>A</variation>
    <location>
        <position position="422"/>
    </location>
</feature>
<feature type="mutagenesis site" description="Does not affect interaction with RAB8A." evidence="21">
    <original>D</original>
    <variation>A</variation>
    <location>
        <position position="499"/>
    </location>
</feature>
<feature type="mutagenesis site" description="Does not interact with RAB8A. Does not localize to cilia." evidence="21">
    <original>F</original>
    <variation>V</variation>
    <location>
        <position position="668"/>
    </location>
</feature>
<feature type="sequence conflict" description="In Ref. 4; BAF85796." evidence="34" ref="4">
    <original>P</original>
    <variation>L</variation>
    <location>
        <position position="180"/>
    </location>
</feature>
<feature type="sequence conflict" description="In Ref. 7; AAI44107." evidence="34" ref="7">
    <original>G</original>
    <variation>E</variation>
    <location>
        <position position="321"/>
    </location>
</feature>
<feature type="strand" evidence="36">
    <location>
        <begin position="10"/>
        <end position="21"/>
    </location>
</feature>
<feature type="strand" evidence="36">
    <location>
        <begin position="24"/>
        <end position="35"/>
    </location>
</feature>
<feature type="strand" evidence="36">
    <location>
        <begin position="38"/>
        <end position="45"/>
    </location>
</feature>
<feature type="strand" evidence="36">
    <location>
        <begin position="52"/>
        <end position="57"/>
    </location>
</feature>
<feature type="strand" evidence="36">
    <location>
        <begin position="59"/>
        <end position="61"/>
    </location>
</feature>
<feature type="strand" evidence="36">
    <location>
        <begin position="63"/>
        <end position="70"/>
    </location>
</feature>
<feature type="helix" evidence="36">
    <location>
        <begin position="76"/>
        <end position="78"/>
    </location>
</feature>
<feature type="strand" evidence="36">
    <location>
        <begin position="80"/>
        <end position="90"/>
    </location>
</feature>
<feature type="strand" evidence="36">
    <location>
        <begin position="94"/>
        <end position="98"/>
    </location>
</feature>
<feature type="helix" evidence="36">
    <location>
        <begin position="101"/>
        <end position="118"/>
    </location>
</feature>
<feature type="helix" evidence="40">
    <location>
        <begin position="222"/>
        <end position="229"/>
    </location>
</feature>
<feature type="helix" evidence="40">
    <location>
        <begin position="231"/>
        <end position="234"/>
    </location>
</feature>
<feature type="strand" evidence="40">
    <location>
        <begin position="235"/>
        <end position="248"/>
    </location>
</feature>
<feature type="helix" evidence="40">
    <location>
        <begin position="259"/>
        <end position="262"/>
    </location>
</feature>
<feature type="strand" evidence="40">
    <location>
        <begin position="265"/>
        <end position="267"/>
    </location>
</feature>
<feature type="strand" evidence="40">
    <location>
        <begin position="270"/>
        <end position="277"/>
    </location>
</feature>
<feature type="helix" evidence="40">
    <location>
        <begin position="283"/>
        <end position="286"/>
    </location>
</feature>
<feature type="helix" evidence="40">
    <location>
        <begin position="292"/>
        <end position="304"/>
    </location>
</feature>
<feature type="strand" evidence="40">
    <location>
        <begin position="311"/>
        <end position="319"/>
    </location>
</feature>
<feature type="strand" evidence="40">
    <location>
        <begin position="322"/>
        <end position="329"/>
    </location>
</feature>
<feature type="helix" evidence="40">
    <location>
        <begin position="332"/>
        <end position="335"/>
    </location>
</feature>
<feature type="strand" evidence="40">
    <location>
        <begin position="336"/>
        <end position="345"/>
    </location>
</feature>
<feature type="helix" evidence="40">
    <location>
        <begin position="348"/>
        <end position="350"/>
    </location>
</feature>
<feature type="strand" evidence="40">
    <location>
        <begin position="355"/>
        <end position="364"/>
    </location>
</feature>
<feature type="strand" evidence="40">
    <location>
        <begin position="367"/>
        <end position="375"/>
    </location>
</feature>
<feature type="helix" evidence="40">
    <location>
        <begin position="383"/>
        <end position="396"/>
    </location>
</feature>
<feature type="helix" evidence="40">
    <location>
        <begin position="411"/>
        <end position="413"/>
    </location>
</feature>
<feature type="strand" evidence="40">
    <location>
        <begin position="414"/>
        <end position="422"/>
    </location>
</feature>
<feature type="helix" evidence="40">
    <location>
        <begin position="432"/>
        <end position="440"/>
    </location>
</feature>
<feature type="helix" evidence="40">
    <location>
        <begin position="444"/>
        <end position="448"/>
    </location>
</feature>
<feature type="helix" evidence="40">
    <location>
        <begin position="452"/>
        <end position="458"/>
    </location>
</feature>
<feature type="strand" evidence="40">
    <location>
        <begin position="461"/>
        <end position="463"/>
    </location>
</feature>
<feature type="strand" evidence="40">
    <location>
        <begin position="483"/>
        <end position="486"/>
    </location>
</feature>
<feature type="strand" evidence="40">
    <location>
        <begin position="489"/>
        <end position="491"/>
    </location>
</feature>
<feature type="strand" evidence="40">
    <location>
        <begin position="499"/>
        <end position="504"/>
    </location>
</feature>
<feature type="strand" evidence="40">
    <location>
        <begin position="506"/>
        <end position="510"/>
    </location>
</feature>
<feature type="strand" evidence="40">
    <location>
        <begin position="521"/>
        <end position="524"/>
    </location>
</feature>
<feature type="strand" evidence="40">
    <location>
        <begin position="527"/>
        <end position="538"/>
    </location>
</feature>
<feature type="helix" evidence="38">
    <location>
        <begin position="541"/>
        <end position="548"/>
    </location>
</feature>
<feature type="helix" evidence="38">
    <location>
        <begin position="553"/>
        <end position="560"/>
    </location>
</feature>
<feature type="strand" evidence="38">
    <location>
        <begin position="565"/>
        <end position="568"/>
    </location>
</feature>
<feature type="strand" evidence="38">
    <location>
        <begin position="571"/>
        <end position="577"/>
    </location>
</feature>
<feature type="strand" evidence="38">
    <location>
        <begin position="583"/>
        <end position="591"/>
    </location>
</feature>
<feature type="strand" evidence="38">
    <location>
        <begin position="593"/>
        <end position="595"/>
    </location>
</feature>
<feature type="strand" evidence="38">
    <location>
        <begin position="597"/>
        <end position="602"/>
    </location>
</feature>
<feature type="strand" evidence="38">
    <location>
        <begin position="608"/>
        <end position="611"/>
    </location>
</feature>
<feature type="strand" evidence="38">
    <location>
        <begin position="615"/>
        <end position="619"/>
    </location>
</feature>
<feature type="strand" evidence="38">
    <location>
        <begin position="621"/>
        <end position="624"/>
    </location>
</feature>
<feature type="strand" evidence="38">
    <location>
        <begin position="629"/>
        <end position="636"/>
    </location>
</feature>
<feature type="helix" evidence="38">
    <location>
        <begin position="640"/>
        <end position="648"/>
    </location>
</feature>
<feature type="strand" evidence="38">
    <location>
        <begin position="649"/>
        <end position="651"/>
    </location>
</feature>
<feature type="strand" evidence="38">
    <location>
        <begin position="655"/>
        <end position="661"/>
    </location>
</feature>
<feature type="strand" evidence="38">
    <location>
        <begin position="666"/>
        <end position="675"/>
    </location>
</feature>
<feature type="helix" evidence="39">
    <location>
        <begin position="684"/>
        <end position="689"/>
    </location>
</feature>
<feature type="helix" evidence="37">
    <location>
        <begin position="700"/>
        <end position="702"/>
    </location>
</feature>
<feature type="helix" evidence="39">
    <location>
        <begin position="736"/>
        <end position="748"/>
    </location>
</feature>
<feature type="turn" evidence="39">
    <location>
        <begin position="753"/>
        <end position="757"/>
    </location>
</feature>
<feature type="helix" evidence="39">
    <location>
        <begin position="762"/>
        <end position="774"/>
    </location>
</feature>
<feature type="helix" evidence="39">
    <location>
        <begin position="784"/>
        <end position="797"/>
    </location>
</feature>
<feature type="helix" evidence="39">
    <location>
        <begin position="805"/>
        <end position="814"/>
    </location>
</feature>
<feature type="helix" evidence="39">
    <location>
        <begin position="818"/>
        <end position="826"/>
    </location>
</feature>
<feature type="helix" evidence="39">
    <location>
        <begin position="830"/>
        <end position="847"/>
    </location>
</feature>
<feature type="helix" evidence="39">
    <location>
        <begin position="850"/>
        <end position="853"/>
    </location>
</feature>
<feature type="helix" evidence="39">
    <location>
        <begin position="857"/>
        <end position="868"/>
    </location>
</feature>
<feature type="helix" evidence="37">
    <location>
        <begin position="873"/>
        <end position="875"/>
    </location>
</feature>
<feature type="helix" evidence="39">
    <location>
        <begin position="883"/>
        <end position="895"/>
    </location>
</feature>
<proteinExistence type="evidence at protein level"/>
<evidence type="ECO:0000250" key="1">
    <source>
        <dbReference type="UniProtKB" id="D3ZGS3"/>
    </source>
</evidence>
<evidence type="ECO:0000255" key="2">
    <source>
        <dbReference type="PROSITE-ProRule" id="PRU00172"/>
    </source>
</evidence>
<evidence type="ECO:0000256" key="3">
    <source>
        <dbReference type="SAM" id="MobiDB-lite"/>
    </source>
</evidence>
<evidence type="ECO:0000269" key="4">
    <source>
    </source>
</evidence>
<evidence type="ECO:0000269" key="5">
    <source>
    </source>
</evidence>
<evidence type="ECO:0000269" key="6">
    <source>
    </source>
</evidence>
<evidence type="ECO:0000269" key="7">
    <source>
    </source>
</evidence>
<evidence type="ECO:0000269" key="8">
    <source>
    </source>
</evidence>
<evidence type="ECO:0000269" key="9">
    <source>
    </source>
</evidence>
<evidence type="ECO:0000269" key="10">
    <source>
    </source>
</evidence>
<evidence type="ECO:0000269" key="11">
    <source>
    </source>
</evidence>
<evidence type="ECO:0000269" key="12">
    <source>
    </source>
</evidence>
<evidence type="ECO:0000269" key="13">
    <source>
    </source>
</evidence>
<evidence type="ECO:0000269" key="14">
    <source>
    </source>
</evidence>
<evidence type="ECO:0000269" key="15">
    <source>
    </source>
</evidence>
<evidence type="ECO:0000269" key="16">
    <source>
    </source>
</evidence>
<evidence type="ECO:0000269" key="17">
    <source>
    </source>
</evidence>
<evidence type="ECO:0000269" key="18">
    <source>
    </source>
</evidence>
<evidence type="ECO:0000269" key="19">
    <source>
    </source>
</evidence>
<evidence type="ECO:0000269" key="20">
    <source>
    </source>
</evidence>
<evidence type="ECO:0000269" key="21">
    <source>
    </source>
</evidence>
<evidence type="ECO:0000269" key="22">
    <source>
    </source>
</evidence>
<evidence type="ECO:0000269" key="23">
    <source>
    </source>
</evidence>
<evidence type="ECO:0000269" key="24">
    <source>
    </source>
</evidence>
<evidence type="ECO:0000269" key="25">
    <source>
    </source>
</evidence>
<evidence type="ECO:0000269" key="26">
    <source>
    </source>
</evidence>
<evidence type="ECO:0000269" key="27">
    <source>
    </source>
</evidence>
<evidence type="ECO:0000269" key="28">
    <source>
    </source>
</evidence>
<evidence type="ECO:0000269" key="29">
    <source>
    </source>
</evidence>
<evidence type="ECO:0000303" key="30">
    <source>
    </source>
</evidence>
<evidence type="ECO:0000303" key="31">
    <source>
    </source>
</evidence>
<evidence type="ECO:0000303" key="32">
    <source>
    </source>
</evidence>
<evidence type="ECO:0000303" key="33">
    <source ref="2"/>
</evidence>
<evidence type="ECO:0000305" key="34"/>
<evidence type="ECO:0000312" key="35">
    <source>
        <dbReference type="HGNC" id="HGNC:8108"/>
    </source>
</evidence>
<evidence type="ECO:0007829" key="36">
    <source>
        <dbReference type="PDB" id="2KIE"/>
    </source>
</evidence>
<evidence type="ECO:0007829" key="37">
    <source>
        <dbReference type="PDB" id="2QV2"/>
    </source>
</evidence>
<evidence type="ECO:0007829" key="38">
    <source>
        <dbReference type="PDB" id="3QBT"/>
    </source>
</evidence>
<evidence type="ECO:0007829" key="39">
    <source>
        <dbReference type="PDB" id="3QIS"/>
    </source>
</evidence>
<evidence type="ECO:0007829" key="40">
    <source>
        <dbReference type="PDB" id="4CMN"/>
    </source>
</evidence>
<keyword id="KW-0002">3D-structure</keyword>
<keyword id="KW-0025">Alternative splicing</keyword>
<keyword id="KW-0898">Cataract</keyword>
<keyword id="KW-0966">Cell projection</keyword>
<keyword id="KW-1186">Ciliopathy</keyword>
<keyword id="KW-0969">Cilium</keyword>
<keyword id="KW-0970">Cilium biogenesis/degradation</keyword>
<keyword id="KW-0168">Coated pit</keyword>
<keyword id="KW-0968">Cytoplasmic vesicle</keyword>
<keyword id="KW-0225">Disease variant</keyword>
<keyword id="KW-0967">Endosome</keyword>
<keyword id="KW-0333">Golgi apparatus</keyword>
<keyword id="KW-0378">Hydrolase</keyword>
<keyword id="KW-0443">Lipid metabolism</keyword>
<keyword id="KW-0458">Lysosome</keyword>
<keyword id="KW-0472">Membrane</keyword>
<keyword id="KW-1267">Proteomics identification</keyword>
<keyword id="KW-1185">Reference proteome</keyword>
<comment type="function">
    <text evidence="4 7 18 19 20 21 22 24 26">Catalyzes the hydrolysis of the 5-position phosphate of phosphatidylinositol 4,5-bisphosphate (PtdIns(4,5)P2) and phosphatidylinositol-3,4,5-bisphosphate (PtdIns(3,4,5)P3), with the greatest catalytic activity towards PtdIns(4,5)P2 (PubMed:10764818, PubMed:15474001, PubMed:7761412, PubMed:9430698). Able also to hydrolyze the 5-phosphate of inositol 1,4,5-trisphosphate and of inositol 1,3,4,5-tetrakisphosphate (PubMed:25869668, PubMed:7761412). Regulates traffic in the endosomal pathway by regulating the specific pool of phosphatidylinositol 4,5-bisphosphate that is associated with endosomes (PubMed:21971085). Involved in primary cilia assembly (PubMed:22228094, PubMed:22543976). Acts as a regulator of phagocytosis, hydrolyzing PtdIns(4,5)P2 to promote phagosome closure, through attenuation of PI3K signaling (PubMed:22072788).</text>
</comment>
<comment type="catalytic activity">
    <reaction evidence="4 7 24 26">
        <text>a 1,2-diacyl-sn-glycero-3-phospho-(1D-myo-inositol-4,5-bisphosphate) + H2O = a 1,2-diacyl-sn-glycero-3-phospho-(1D-myo-inositol 4-phosphate) + phosphate</text>
        <dbReference type="Rhea" id="RHEA:22764"/>
        <dbReference type="ChEBI" id="CHEBI:15377"/>
        <dbReference type="ChEBI" id="CHEBI:43474"/>
        <dbReference type="ChEBI" id="CHEBI:58178"/>
        <dbReference type="ChEBI" id="CHEBI:58456"/>
        <dbReference type="EC" id="3.1.3.36"/>
    </reaction>
    <physiologicalReaction direction="left-to-right" evidence="34">
        <dbReference type="Rhea" id="RHEA:22765"/>
    </physiologicalReaction>
</comment>
<comment type="catalytic activity">
    <reaction evidence="4 7">
        <text>a 1,2-diacyl-sn-glycero-3-phospho-(1D-myo-inositol-3,4,5-trisphosphate) + H2O = a 1,2-diacyl-sn-glycero-3-phospho-(1D-myo-inositol-3,4-bisphosphate) + phosphate</text>
        <dbReference type="Rhea" id="RHEA:25528"/>
        <dbReference type="ChEBI" id="CHEBI:15377"/>
        <dbReference type="ChEBI" id="CHEBI:43474"/>
        <dbReference type="ChEBI" id="CHEBI:57658"/>
        <dbReference type="ChEBI" id="CHEBI:57836"/>
        <dbReference type="EC" id="3.1.3.86"/>
    </reaction>
    <physiologicalReaction direction="left-to-right" evidence="34">
        <dbReference type="Rhea" id="RHEA:25529"/>
    </physiologicalReaction>
</comment>
<comment type="catalytic activity">
    <reaction evidence="7 24">
        <text>1D-myo-inositol 1,3,4,5-tetrakisphosphate + H2O = 1D-myo-inositol 1,3,4-trisphosphate + phosphate</text>
        <dbReference type="Rhea" id="RHEA:11392"/>
        <dbReference type="ChEBI" id="CHEBI:15377"/>
        <dbReference type="ChEBI" id="CHEBI:43474"/>
        <dbReference type="ChEBI" id="CHEBI:57895"/>
        <dbReference type="ChEBI" id="CHEBI:58414"/>
        <dbReference type="EC" id="3.1.3.56"/>
    </reaction>
    <physiologicalReaction direction="left-to-right" evidence="34">
        <dbReference type="Rhea" id="RHEA:11393"/>
    </physiologicalReaction>
</comment>
<comment type="catalytic activity">
    <reaction evidence="7 24">
        <text>1D-myo-inositol 1,4,5-trisphosphate + H2O = 1D-myo-inositol 1,4-bisphosphate + phosphate</text>
        <dbReference type="Rhea" id="RHEA:19797"/>
        <dbReference type="ChEBI" id="CHEBI:15377"/>
        <dbReference type="ChEBI" id="CHEBI:43474"/>
        <dbReference type="ChEBI" id="CHEBI:58282"/>
        <dbReference type="ChEBI" id="CHEBI:203600"/>
        <dbReference type="EC" id="3.1.3.56"/>
    </reaction>
    <physiologicalReaction direction="left-to-right" evidence="34">
        <dbReference type="Rhea" id="RHEA:19798"/>
    </physiologicalReaction>
</comment>
<comment type="biophysicochemical properties">
    <kinetics>
        <KM evidence="24">30 uM for Ins(1,3,4,5)P4</KM>
        <KM evidence="7">139 uM for PtdIns(3,4,5)P3</KM>
        <KM evidence="7">23 uM for PtdIns(4,5)P2</KM>
        <KM evidence="24">70 uM for Ins(1,4,5)P3</KM>
        <Vmax evidence="24">1.8 umol/min/mg enzyme with Ins(1,3,4,5)P4 as substrate</Vmax>
        <Vmax evidence="24">8.0 umol/min/mg enzyme with Ins(1,4,5)P3 as substrate</Vmax>
    </kinetics>
</comment>
<comment type="subunit">
    <text evidence="10 12 13 15 16 17 21 22 23">Interacts with APPL1, PHETA1 and PHETA2; APPL1-binding and PHETA1-binding are mutually exclusive. Interacts with clathrin heavy chain. Interacts with several Rab GTPases (in their GTP-bound forms), at least RAB1B, RAB5A, RAB6A, RAB8A, RAB31 and RAB35; these interactions may play a dual role in targeting OCRL to the specific membranes and stimulating the phosphatase activity. Interaction with RAB8A modulates OCRL recruitment to cilia. Interacts with INPP5F (PubMed:25869668).</text>
</comment>
<comment type="interaction">
    <interactant intactId="EBI-6148898">
        <id>Q01968</id>
    </interactant>
    <interactant intactId="EBI-354967">
        <id>Q00610</id>
        <label>CLTC</label>
    </interactant>
    <organismsDiffer>false</organismsDiffer>
    <experiments>10</experiments>
</comment>
<comment type="interaction">
    <interactant intactId="EBI-6148898">
        <id>Q01968</id>
    </interactant>
    <interactant intactId="EBI-7310488">
        <id>Q8N4B1</id>
        <label>PHETA1</label>
    </interactant>
    <organismsDiffer>false</organismsDiffer>
    <experiments>5</experiments>
</comment>
<comment type="interaction">
    <interactant intactId="EBI-6148898">
        <id>Q01968</id>
    </interactant>
    <interactant intactId="EBI-1056404">
        <id>P61106</id>
        <label>RAB14</label>
    </interactant>
    <organismsDiffer>false</organismsDiffer>
    <experiments>3</experiments>
</comment>
<comment type="interaction">
    <interactant intactId="EBI-6148898">
        <id>Q01968</id>
    </interactant>
    <interactant intactId="EBI-716845">
        <id>P62820</id>
        <label>RAB1A</label>
    </interactant>
    <organismsDiffer>false</organismsDiffer>
    <experiments>8</experiments>
</comment>
<comment type="interaction">
    <interactant intactId="EBI-6148898">
        <id>Q01968</id>
    </interactant>
    <interactant intactId="EBI-1045214">
        <id>Q9H0U4</id>
        <label>RAB1B</label>
    </interactant>
    <organismsDiffer>false</organismsDiffer>
    <experiments>3</experiments>
</comment>
<comment type="interaction">
    <interactant intactId="EBI-6148898">
        <id>Q01968</id>
    </interactant>
    <interactant intactId="EBI-399437">
        <id>P20339</id>
        <label>RAB5A</label>
    </interactant>
    <organismsDiffer>false</organismsDiffer>
    <experiments>11</experiments>
</comment>
<comment type="interaction">
    <interactant intactId="EBI-6148898">
        <id>Q01968</id>
    </interactant>
    <interactant intactId="EBI-1052826">
        <id>P20340</id>
        <label>RAB6A</label>
    </interactant>
    <organismsDiffer>false</organismsDiffer>
    <experiments>13</experiments>
</comment>
<comment type="interaction">
    <interactant intactId="EBI-6148898">
        <id>Q01968</id>
    </interactant>
    <interactant intactId="EBI-722293">
        <id>P61006</id>
        <label>RAB8A</label>
    </interactant>
    <organismsDiffer>false</organismsDiffer>
    <experiments>15</experiments>
</comment>
<comment type="interaction">
    <interactant intactId="EBI-6148898">
        <id>Q01968</id>
    </interactant>
    <interactant intactId="EBI-413628">
        <id>P63000</id>
        <label>RAC1</label>
    </interactant>
    <organismsDiffer>false</organismsDiffer>
    <experiments>3</experiments>
</comment>
<comment type="interaction">
    <interactant intactId="EBI-6148898">
        <id>Q01968</id>
    </interactant>
    <interactant intactId="EBI-77848">
        <id>Q9Y5X1</id>
        <label>SNX9</label>
    </interactant>
    <organismsDiffer>false</organismsDiffer>
    <experiments>5</experiments>
</comment>
<comment type="interaction">
    <interactant intactId="EBI-6148898">
        <id>Q01968</id>
    </interactant>
    <interactant intactId="EBI-397997">
        <id>P11442</id>
        <label>Cltc</label>
    </interactant>
    <organismsDiffer>true</organismsDiffer>
    <experiments>5</experiments>
</comment>
<comment type="interaction">
    <interactant intactId="EBI-6148898">
        <id>Q01968</id>
    </interactant>
    <interactant intactId="EBI-769168">
        <id>Q68FD5</id>
        <label>Cltc</label>
    </interactant>
    <organismsDiffer>true</organismsDiffer>
    <experiments>2</experiments>
</comment>
<comment type="interaction">
    <interactant intactId="EBI-6148898">
        <id>Q01968</id>
    </interactant>
    <interactant intactId="EBI-8429356">
        <id>Q91VH2</id>
        <label>Snx9</label>
    </interactant>
    <organismsDiffer>true</organismsDiffer>
    <experiments>2</experiments>
</comment>
<comment type="interaction">
    <interactant intactId="EBI-11749425">
        <id>Q01968-2</id>
    </interactant>
    <interactant intactId="EBI-12039345">
        <id>Q9UBR4-2</id>
        <label>LHX3</label>
    </interactant>
    <organismsDiffer>false</organismsDiffer>
    <experiments>3</experiments>
</comment>
<comment type="interaction">
    <interactant intactId="EBI-11749425">
        <id>Q01968-2</id>
    </interactant>
    <interactant intactId="EBI-14131832">
        <id>Q8N4B1-4</id>
        <label>PHETA1</label>
    </interactant>
    <organismsDiffer>false</organismsDiffer>
    <experiments>3</experiments>
</comment>
<comment type="interaction">
    <interactant intactId="EBI-11749425">
        <id>Q01968-2</id>
    </interactant>
    <interactant intactId="EBI-11081747">
        <id>Q6ICB4</id>
        <label>PHETA2</label>
    </interactant>
    <organismsDiffer>false</organismsDiffer>
    <experiments>6</experiments>
</comment>
<comment type="interaction">
    <interactant intactId="EBI-11749425">
        <id>Q01968-2</id>
    </interactant>
    <interactant intactId="EBI-14065960">
        <id>Q96HR9-2</id>
        <label>REEP6</label>
    </interactant>
    <organismsDiffer>false</organismsDiffer>
    <experiments>3</experiments>
</comment>
<comment type="subcellular location">
    <subcellularLocation>
        <location evidence="1">Cytoplasmic vesicle</location>
        <location evidence="1">Phagosome membrane</location>
    </subcellularLocation>
    <subcellularLocation>
        <location evidence="18 22">Early endosome membrane</location>
    </subcellularLocation>
    <subcellularLocation>
        <location evidence="22">Membrane</location>
        <location evidence="22">Clathrin-coated pit</location>
    </subcellularLocation>
    <subcellularLocation>
        <location evidence="21">Cell projection</location>
        <location evidence="21">Cilium</location>
        <location evidence="21">Photoreceptor outer segment</location>
    </subcellularLocation>
    <subcellularLocation>
        <location evidence="21">Cell projection</location>
        <location evidence="21">Cilium</location>
    </subcellularLocation>
    <subcellularLocation>
        <location evidence="1">Cytoplasmic vesicle</location>
    </subcellularLocation>
    <subcellularLocation>
        <location evidence="18 22">Endosome</location>
    </subcellularLocation>
    <subcellularLocation>
        <location evidence="1">Golgi apparatus</location>
        <location evidence="1">trans-Golgi network</location>
    </subcellularLocation>
    <subcellularLocation>
        <location evidence="26">Lysosome</location>
    </subcellularLocation>
    <text evidence="19 22">Also found on macropinosomes (PubMed:25869668). Colocalized with APPL1 on phagosomes (PubMed:22072788).</text>
</comment>
<comment type="alternative products">
    <event type="alternative splicing"/>
    <isoform>
        <id>Q01968-1</id>
        <name>A</name>
        <sequence type="displayed"/>
    </isoform>
    <isoform>
        <id>Q01968-2</id>
        <name>B</name>
        <sequence type="described" ref="VSP_002681"/>
    </isoform>
</comment>
<comment type="tissue specificity">
    <text evidence="21">Brain, skeletal muscle, heart, kidney, lung, placenta and fibroblasts. Expressed in the retina and the retinal pigment epithelium.</text>
</comment>
<comment type="domain">
    <text evidence="12">The ASH (ASPM-SPD2-Hydin) and RhoGAP (Rho GTPase activating) domains form a single folding module. The ASH domain has an immunoglobulin-like fold, the Rho-GAP domain lacks the catalytic arginine and is catalytically inactive. The ASH-RhoGAP module regulates the majority of the protein-protein interactions currently described. The ASH domain mediates association with membrane-targeting Rab GTPases. The Rho-GAP domain interacts with the endocytic adapter APPL1, which is then displaced by PHETA1 and PHETA2 as endosomes mature.</text>
</comment>
<comment type="disease" evidence="5 6 11 13 14 15 25 27 28 29">
    <disease id="DI-01916">
        <name>Lowe oculocerebrorenal syndrome</name>
        <acronym>OCRL</acronym>
        <description>X-linked multisystem disorder affecting eyes, nervous system, and kidney. It is characterized by hydrophthalmia, cataract, intellectual disability, vitamin D-resistant rickets, aminoaciduria, and reduced ammonia production by the kidney. Ocular abnormalities include cataract, glaucoma, microphthalmos, and decreased visual acuity. Developmental delay, hypotonia, behavior abnormalities, and areflexia are also present. Renal tubular involvement is characterized by impaired reabsorption of bicarbonate, amino acids, and phosphate. Musculoskeletal abnormalities such as joint hypermobility, dislocated hips, and fractures may develop as consequences of renal tubular acidosis and hypophosphatemia. Cataract is the only significant manifestation in carriers and is detected by slit-lamp examination.</description>
        <dbReference type="MIM" id="309000"/>
    </disease>
    <text>The disease is caused by variants affecting the gene represented in this entry.</text>
</comment>
<comment type="disease" evidence="8 9 14">
    <disease id="DI-00386">
        <name>Dent disease 2</name>
        <acronym>DENT2</acronym>
        <description>An X-linked renal disease belonging to the 'Dent disease complex', a group of disorders characterized by proximal renal tubular defect, hypercalciuria, nephrocalcinosis, and renal insufficiency. The spectrum of phenotypic features is remarkably similar in the various disorders, except for differences in the severity of bone deformities and renal impairment. Characteristic abnormalities include low-molecular-weight proteinuria and other features of Fanconi syndrome, such as glycosuria, aminoaciduria, and phosphaturia, but typically do not include proximal renal tubular acidosis. Progressive renal failure is common, as are nephrocalcinosis and kidney stones.</description>
        <dbReference type="MIM" id="300555"/>
    </disease>
    <text>The disease is caused by variants affecting the gene represented in this entry.</text>
</comment>
<comment type="similarity">
    <text evidence="34">Belongs to the inositol 1,4,5-trisphosphate 5-phosphatase type II family.</text>
</comment>
<comment type="caution">
    <text evidence="34">It is uncertain whether Met-1, Met-18 or Met-20 is the initiator.</text>
</comment>
<comment type="sequence caution" evidence="34">
    <conflict type="erroneous initiation">
        <sequence resource="EMBL-CDS" id="AAA59964"/>
    </conflict>
    <text>Extended N-terminus.</text>
</comment>
<comment type="online information" name="Lowe Syndrome mutation database">
    <link uri="http://research.nhgri.nih.gov/lowe/"/>
</comment>
<protein>
    <recommendedName>
        <fullName evidence="34">Inositol polyphosphate 5-phosphatase OCRL</fullName>
        <ecNumber evidence="4 7 24">3.1.3.36</ecNumber>
        <ecNumber evidence="7 24">3.1.3.56</ecNumber>
    </recommendedName>
    <alternativeName>
        <fullName>Inositol polyphosphate 5-phosphatase OCRL-1</fullName>
        <shortName evidence="32">OCRL-1</shortName>
    </alternativeName>
    <alternativeName>
        <fullName>Lowe oculocerebrorenal syndrome protein</fullName>
    </alternativeName>
    <alternativeName>
        <fullName>Phosphatidylinositol 3,4,5-triphosphate 5-phosphatase</fullName>
        <ecNumber evidence="4 7">3.1.3.86</ecNumber>
    </alternativeName>
</protein>
<name>OCRL_HUMAN</name>
<sequence>MEPPLPVGAQPLATVEGMEMKGPLREPCALTLAQRNGQYELIIQLHEKEQHVQDIIPINSHFRCVQEAEETLLIDIASNSGCKIRVQGDWIRERRFEIPDEEHCLKFLSAVLAAQKAQSQLLVPEQKDSSSWYQKLDTKDKPSVFSGLLGFEDNFSSMNLDKKINSQNQPTGIHREPPPPPFSVNKMLPREKEASNKEQPKVTNTMRKLFVPNTQSGQREGLIKHILAKREKEYVNIQTFRFFVGTWNVNGQSPDSGLEPWLNCDPNPPDIYCIGFQELDLSTEAFFYFESVKEQEWSMAVERGLHSKAKYKKVQLVRLVGMMLLIFARKDQCRYIRDIATETVGTGIMGKMGNKGGVAVRFVFHNTTFCIVNSHLAAHVEDFERRNQDYKDICARMSFVVPNQTLPQLNIMKHEVVIWLGDLNYRLCMPDANEVKSLINKKDLQRLLKFDQLNIQRTQKKAFVDFNEGEIKFIPTYKYDSKTDRWDSSGKCRVPAWCDRILWRGTNVNQLNYRSHMELKTSDHKPVSALFHIGVKVVDERRYRKVFEDSVRIMDRMENDFLPSLELSRREFVFENVKFRQLQKEKFQISNNGQVPCHFSFIPKLNDSQYCKPWLRAEPFEGYLEPNETVDISLDVYVSKDSVTILNSGEDKIEDILVLHLDRGKDYFLTISGNYLPSCFGTSLEALCRMKRPIREVPVTKLIDLEEDSFLEKEKSLLQMVPLDEGASERPLQVPKEIWLLVDHLFKYACHQEDLFQTPGMQEELQQIIDCLDTSIPETIPGSNHSVAEALLIFLEALPEPVICYELYQRCLDSAYDPRICRQVISQLPRCHRNVFRYLMAFLRELLKFSEYNSVNANMIATLFTSLLLRPPPNLMARQTPSDRQRAIQFLLGFLLGSEED</sequence>